<sequence length="3033" mass="328828">MSTNPKPQRKTKRNTNRRPEDVKFPGGGQIVGGVYLLPRRGPRLGVRTTRKTSERSQPRGRRQPIPKDRRSTGKAWGKPGRPWPLYGNEGLGWAGWLLSPRGSRPSWGPTDPRHRSRNVGKVIDTLTCGFADLMGYIPVVGAPLSGAARAVAHGVRVLEDGVNYATGNLPGFPFSIFLLALLSCITVPVSAAQVKNTSSSYMVTNDCSNDSITWQLEAAVLHVPGCVPCERVGNTSRCWVPVSPNMAVRQPGALTQGLRTHIDMVVMSATFCSALYVGDLCGGVMLAAQVFIVSPQYHWFVQECNCSIYPGTITGHRMAWDMMMNWSPTATMILAYVMRVPEVIIDIVSGAHWGVMFGLAYFSMQGAWAKVIVILLLAAGVDAGTTTVGGAVARSTNVIAGVFSHGPQQNIQLINTNGSWHINRTALNCNDSLNTGFLAALFYTNRFNSSGCPGRLSACRNIEAFRIGWGTLQYEDNVTNPEDMRPYCWHYPPKPCGVVPARSVCGPVYCFTPSPVVVGTTDRRGVPTYTWGENETDVFLLNSTRPPQGSWFGCTWMNSTGFTKTCGAPPCRTRADFNASTDLLCPTDCFRKHPDATYIKCGSGPWLTPKCLVHYPYRLWHYPCTVNFTIFKIRMYVGGVEHRLTAACNFTRGDRCDLEDRDRSQLSPLLHSTTEWAILPCTYSDLPALSTGLLHLHQNIVDVQYMYGLSPAITKYVVRWEWVVLLFLLLADARVCACLWMLILLGQAEAALEKLVVLHAASAANCHGLLYFAIFFVAAWHIRGRVVPLTTYCLTGLWPFCLLLMALPRQAYAYDAPVHGQIGVGLLILITLFTLTPGYKTLLGQCLWWLCYLLTLGEAMIQEWVPPMQVRGGRDGIAWAVTIFCPGVVFDITKWLLALLGPAYLLRAALTHVPYFVRAHALIRVCALVKQLAGGRYVQVALLALGRWTGTYIYDHLTPMSDWAASGLRDLAVAVEPIIFSPMEKKVIVWGAETAACGDILHGLPVSARLGQEILLGPADGYTSKGWKLLAPITAYAQQTRGLLGAIVVSMTGRDRTEQAGEVQILSTVSQSFLGTTISGVLWTVYHGAGNKTLAGLRGPVTQMYSSAEGDLVGWPSPPGTKSLEPCKCGAVDLYLVTRNADVIPARRRGDKRGALLSPRPISTLKGSSGGPVLCPRGHVVGLFRAAVCSRGVAKSIDFIPVETLDVVTRSPTFSDNSTPPAVPQTYQVGYLHAPTGSGKSTKVPVAYAAQGYKVLVLNPSVAATLGFGAYLSKAHGINPNIRTGVRTVMTGEAITYSTYGKFLADGGCASGAYDIIICDECHAVDATSILGIGTVLDQAETAGVRLTVLATATPPGSVTTPHPDIEEVGLGREGEIPFYGRAIPLSCIKGGRHLIFCHSKKKCDELAAALRGMGLNAVAYYRGLDVSIIPAQGDVVVVATDALMTGYTGDFDSVIDCNVAVTQAVDFSLDPTFTITTQTVPQDAVSRSQRRGRTGRGRQGTYRYVSTGERASGMFDSVVLCECYDAGAAWYDLTPAETTVRLRAYFNTPGLPVCQDHLEFWEAVFTGLTHIDAHFLSQTKQAGENFAYLVAYQATVCARAKAPPPSWDAMWKCLARLKPTLAGPTPLLYRLGPITNEVTLTHPGTKYIATCMQADLEVMTSTWVLAGGVLAAVAAYCLATGCVSIIGRLHVNQRVVVAPDKEVLYEAFDEMEECASRAALIEEGQRIAEMLKSKIQGLLQQASKQAQDIQPAMQASWPKVEQFWARHMWNFISGIQYLAGLSTLPGNPAVASMMAFSAALTSPLSTSTTILLNIMGGWLASQIAPPAGATGFVVSGLVGAAVGSIGLGKVLVDILAGYGAGISGALVAFKIMSGEKPSMEDVINLLPGILSPGALVVGVICAAILRRHVGPGEGAVQWMNRLIAFASRGNHVAPTHYVTESDASQRVTQLLGSLTITSLLRRLHNWITEDCPIPCSGSWLRDVWDWVCTILTDFKNWLTSKLFPKLPGLPFISCQKGYKGVWAGTGIMTTRCPCGANISGNVRLGSMRITGPKTCMNTWQGTFPINCYTEGQCAPKPPTNYKTAIWRVAASEYAEVTQHGSYSYVTGLTTDNLKIPCQLPSPEFFSWVDGVQIHRFAPTPKPFFRDEVSFCVGLNSYAVGSQLPCEPEPDADVLRSMLTDPPHITAETAARRLARGSPPSEASSSVSQLSAPSLRATCTTHSNTYDVDMVDANLLMEGGVAQTEPESRVPVLDFLEPMAEEESDLEPSIPSECMLPRSGFPRALPAWARPDYNPPLVESWRRPDYQPPTVAGCALPPPKKAPTPPPRRRRTVGLSESTISEALQQLAIKTFGQPPSSGDAGSSTGAGAAESGGPTSPGEPAPSETGSASSMPPLEGEPGDPDLESDQVELQPPPQGGGVAPGSGSGSWSTCSEEDDTTVCCSMSYSWTGALITPCSPEEEKLPINPLSNSLLRYHNKVYCTTSKSASQRAKKVTFDRTQVLDAHYDSVLKDIKLAASKVSARLLTLEEACQLTPPHSARSKYGFGAKEVRSLSGRAVNHIKSVWKDLLEDPQTPIPTTIMAKNEVFCVDPAKGGKKPARLIVYPDLGVRVCEKMALYDITQKLPQAVMGASYGFQYSPAQRVEYLLKAWAEKKDPMGFSYDTRCFDSTVTERDIRTEESIYQACSLPEEARTAIHSLTERLYVGGPMFNSKGQTCGYRRCRASGVLTTSMGNTITCYVKALAACKAAGIVAPTMLVCGDDLVVISESQGTEEDERNLRAFTEAMTRYSAPPGDPPRPEYDLELITSCSSNVSVALGPRGRRRYYLTRDPTTPLARAAWETVRHSPINSWLGNIIQYAPTIWVRMVLMTHFFSILMVQDTLDQNLNFEMYGSVYSVNPLDLPAIIERLHGLDAFSMHTYSHHELTRVASALRKLGAPPLRVWKSRARAVRASLISRGGKAAVCGRYLFNWAVKTKLKLTPLPEARLLDLSSWFTVGAGGGDIFHSVSRARPRSLLFGLLLLFVGVGLFLLPAR</sequence>
<organismHost>
    <name type="scientific">Homo sapiens</name>
    <name type="common">Human</name>
    <dbReference type="NCBI Taxonomy" id="9606"/>
</organismHost>
<evidence type="ECO:0000250" key="1"/>
<evidence type="ECO:0000250" key="2">
    <source>
        <dbReference type="UniProtKB" id="O92972"/>
    </source>
</evidence>
<evidence type="ECO:0000250" key="3">
    <source>
        <dbReference type="UniProtKB" id="P26662"/>
    </source>
</evidence>
<evidence type="ECO:0000250" key="4">
    <source>
        <dbReference type="UniProtKB" id="P26663"/>
    </source>
</evidence>
<evidence type="ECO:0000250" key="5">
    <source>
        <dbReference type="UniProtKB" id="P26664"/>
    </source>
</evidence>
<evidence type="ECO:0000250" key="6">
    <source>
        <dbReference type="UniProtKB" id="P27958"/>
    </source>
</evidence>
<evidence type="ECO:0000250" key="7">
    <source>
        <dbReference type="UniProtKB" id="P29846"/>
    </source>
</evidence>
<evidence type="ECO:0000250" key="8">
    <source>
        <dbReference type="UniProtKB" id="Q01403"/>
    </source>
</evidence>
<evidence type="ECO:0000250" key="9">
    <source>
        <dbReference type="UniProtKB" id="Q03463"/>
    </source>
</evidence>
<evidence type="ECO:0000250" key="10">
    <source>
        <dbReference type="UniProtKB" id="Q5EG65"/>
    </source>
</evidence>
<evidence type="ECO:0000250" key="11">
    <source>
        <dbReference type="UniProtKB" id="Q913V3"/>
    </source>
</evidence>
<evidence type="ECO:0000250" key="12">
    <source>
        <dbReference type="UniProtKB" id="Q9WMX2"/>
    </source>
</evidence>
<evidence type="ECO:0000255" key="13"/>
<evidence type="ECO:0000255" key="14">
    <source>
        <dbReference type="PROSITE-ProRule" id="PRU00539"/>
    </source>
</evidence>
<evidence type="ECO:0000255" key="15">
    <source>
        <dbReference type="PROSITE-ProRule" id="PRU00541"/>
    </source>
</evidence>
<evidence type="ECO:0000255" key="16">
    <source>
        <dbReference type="PROSITE-ProRule" id="PRU01030"/>
    </source>
</evidence>
<evidence type="ECO:0000255" key="17">
    <source>
        <dbReference type="PROSITE-ProRule" id="PRU01166"/>
    </source>
</evidence>
<evidence type="ECO:0000256" key="18">
    <source>
        <dbReference type="SAM" id="MobiDB-lite"/>
    </source>
</evidence>
<evidence type="ECO:0000269" key="19">
    <source>
    </source>
</evidence>
<evidence type="ECO:0000269" key="20">
    <source>
    </source>
</evidence>
<evidence type="ECO:0000269" key="21">
    <source>
    </source>
</evidence>
<evidence type="ECO:0000269" key="22">
    <source>
    </source>
</evidence>
<evidence type="ECO:0000269" key="23">
    <source>
    </source>
</evidence>
<evidence type="ECO:0000269" key="24">
    <source>
    </source>
</evidence>
<evidence type="ECO:0000269" key="25">
    <source>
    </source>
</evidence>
<evidence type="ECO:0000269" key="26">
    <source>
    </source>
</evidence>
<evidence type="ECO:0000269" key="27">
    <source>
    </source>
</evidence>
<evidence type="ECO:0000269" key="28">
    <source>
    </source>
</evidence>
<evidence type="ECO:0000269" key="29">
    <source>
    </source>
</evidence>
<evidence type="ECO:0000269" key="30">
    <source>
    </source>
</evidence>
<evidence type="ECO:0000269" key="31">
    <source>
    </source>
</evidence>
<evidence type="ECO:0000269" key="32">
    <source>
    </source>
</evidence>
<evidence type="ECO:0000269" key="33">
    <source>
    </source>
</evidence>
<evidence type="ECO:0000269" key="34">
    <source>
    </source>
</evidence>
<evidence type="ECO:0000269" key="35">
    <source>
    </source>
</evidence>
<evidence type="ECO:0000269" key="36">
    <source>
    </source>
</evidence>
<evidence type="ECO:0000269" key="37">
    <source>
    </source>
</evidence>
<evidence type="ECO:0000269" key="38">
    <source>
    </source>
</evidence>
<evidence type="ECO:0000269" key="39">
    <source>
    </source>
</evidence>
<evidence type="ECO:0000269" key="40">
    <source>
    </source>
</evidence>
<evidence type="ECO:0000269" key="41">
    <source>
    </source>
</evidence>
<evidence type="ECO:0000269" key="42">
    <source>
    </source>
</evidence>
<evidence type="ECO:0000269" key="43">
    <source>
    </source>
</evidence>
<evidence type="ECO:0000269" key="44">
    <source>
    </source>
</evidence>
<evidence type="ECO:0000303" key="45">
    <source>
    </source>
</evidence>
<evidence type="ECO:0000305" key="46"/>
<evidence type="ECO:0000305" key="47">
    <source>
    </source>
</evidence>
<evidence type="ECO:0000305" key="48">
    <source>
    </source>
</evidence>
<evidence type="ECO:0000305" key="49">
    <source>
    </source>
</evidence>
<evidence type="ECO:0007829" key="50">
    <source>
        <dbReference type="PDB" id="2KZQ"/>
    </source>
</evidence>
<evidence type="ECO:0007829" key="51">
    <source>
        <dbReference type="PDB" id="2LIF"/>
    </source>
</evidence>
<evidence type="ECO:0007829" key="52">
    <source>
        <dbReference type="PDB" id="2LVG"/>
    </source>
</evidence>
<evidence type="ECO:0007829" key="53">
    <source>
        <dbReference type="PDB" id="2XXD"/>
    </source>
</evidence>
<evidence type="ECO:0007829" key="54">
    <source>
        <dbReference type="PDB" id="2XYM"/>
    </source>
</evidence>
<evidence type="ECO:0007829" key="55">
    <source>
        <dbReference type="PDB" id="4AEP"/>
    </source>
</evidence>
<evidence type="ECO:0007829" key="56">
    <source>
        <dbReference type="PDB" id="4E76"/>
    </source>
</evidence>
<evidence type="ECO:0007829" key="57">
    <source>
        <dbReference type="PDB" id="4WTL"/>
    </source>
</evidence>
<evidence type="ECO:0007829" key="58">
    <source>
        <dbReference type="PDB" id="5NPJ"/>
    </source>
</evidence>
<evidence type="ECO:0007829" key="59">
    <source>
        <dbReference type="PDB" id="5TWM"/>
    </source>
</evidence>
<name>POLG_HCVJF</name>
<feature type="initiator methionine" description="Removed; by host" evidence="5">
    <location>
        <position position="1"/>
    </location>
</feature>
<feature type="chain" id="PRO_0000450856" description="Genome polyprotein">
    <location>
        <begin position="2"/>
        <end position="3033"/>
    </location>
</feature>
<feature type="chain" id="PRO_0000045592" description="Core protein precursor">
    <location>
        <begin position="2"/>
        <end position="191"/>
    </location>
</feature>
<feature type="chain" id="PRO_0000045593" description="Mature core protein">
    <location>
        <begin position="2"/>
        <end position="177"/>
    </location>
</feature>
<feature type="propeptide" id="PRO_0000045594" description="ER anchor for the core protein, removed in mature form by host signal peptidase" evidence="6">
    <location>
        <begin position="178"/>
        <end position="191"/>
    </location>
</feature>
<feature type="chain" id="PRO_0000045595" description="Envelope glycoprotein E1">
    <location>
        <begin position="192"/>
        <end position="383"/>
    </location>
</feature>
<feature type="chain" id="PRO_0000045596" description="Envelope glycoprotein E2">
    <location>
        <begin position="384"/>
        <end position="750"/>
    </location>
</feature>
<feature type="chain" id="PRO_0000045597" description="Viroporin p7">
    <location>
        <begin position="751"/>
        <end position="813"/>
    </location>
</feature>
<feature type="chain" id="PRO_0000045598" description="Protease NS2" evidence="16">
    <location>
        <begin position="814"/>
        <end position="1030"/>
    </location>
</feature>
<feature type="chain" id="PRO_0000045599" description="Serine protease/helicase NS3">
    <location>
        <begin position="1031"/>
        <end position="1661"/>
    </location>
</feature>
<feature type="chain" id="PRO_0000045600" description="Non-structural protein 4A">
    <location>
        <begin position="1662"/>
        <end position="1715"/>
    </location>
</feature>
<feature type="chain" id="PRO_0000045601" description="Non-structural protein 4B">
    <location>
        <begin position="1716"/>
        <end position="1976"/>
    </location>
</feature>
<feature type="chain" id="PRO_0000045602" description="Non-structural protein 5A">
    <location>
        <begin position="1977"/>
        <end position="2442"/>
    </location>
</feature>
<feature type="chain" id="PRO_0000045603" description="RNA-directed RNA polymerase">
    <location>
        <begin position="2443"/>
        <end position="3033"/>
    </location>
</feature>
<feature type="topological domain" description="Cytoplasmic" evidence="13">
    <location>
        <begin position="2"/>
        <end position="168"/>
    </location>
</feature>
<feature type="transmembrane region" description="Helical" evidence="13">
    <location>
        <begin position="169"/>
        <end position="189"/>
    </location>
</feature>
<feature type="topological domain" description="Lumenal" evidence="6">
    <location>
        <begin position="190"/>
        <end position="358"/>
    </location>
</feature>
<feature type="transmembrane region" description="Helical" evidence="6">
    <location>
        <begin position="359"/>
        <end position="379"/>
    </location>
</feature>
<feature type="topological domain" description="Lumenal" evidence="6">
    <location>
        <begin position="380"/>
        <end position="729"/>
    </location>
</feature>
<feature type="transmembrane region" description="Helical" evidence="6">
    <location>
        <begin position="730"/>
        <end position="750"/>
    </location>
</feature>
<feature type="topological domain" description="Lumenal" evidence="36">
    <location>
        <begin position="751"/>
        <end position="761"/>
    </location>
</feature>
<feature type="transmembrane region" description="Helical" evidence="6">
    <location>
        <begin position="762"/>
        <end position="782"/>
    </location>
</feature>
<feature type="topological domain" description="Cytoplasmic" evidence="6">
    <location>
        <begin position="783"/>
        <end position="785"/>
    </location>
</feature>
<feature type="transmembrane region" description="Helical" evidence="6">
    <location>
        <begin position="786"/>
        <end position="807"/>
    </location>
</feature>
<feature type="topological domain" description="Lumenal" evidence="6">
    <location>
        <begin position="808"/>
        <end position="817"/>
    </location>
</feature>
<feature type="transmembrane region" description="Helical" evidence="12">
    <location>
        <begin position="818"/>
        <end position="838"/>
    </location>
</feature>
<feature type="topological domain" description="Cytoplasmic" evidence="12">
    <location>
        <begin position="839"/>
        <end position="842"/>
    </location>
</feature>
<feature type="transmembrane region" description="Helical" evidence="12">
    <location>
        <begin position="843"/>
        <end position="863"/>
    </location>
</feature>
<feature type="topological domain" description="Lumenal" evidence="12">
    <location>
        <begin position="864"/>
        <end position="885"/>
    </location>
</feature>
<feature type="transmembrane region" description="Helical" evidence="12">
    <location>
        <begin position="886"/>
        <end position="906"/>
    </location>
</feature>
<feature type="topological domain" description="Cytoplasmic" evidence="12">
    <location>
        <begin position="907"/>
        <end position="1661"/>
    </location>
</feature>
<feature type="transmembrane region" description="Helical" evidence="13">
    <location>
        <begin position="1662"/>
        <end position="1682"/>
    </location>
</feature>
<feature type="topological domain" description="Cytoplasmic" evidence="13">
    <location>
        <begin position="1683"/>
        <end position="1809"/>
    </location>
</feature>
<feature type="transmembrane region" description="Helical" evidence="13">
    <location>
        <begin position="1810"/>
        <end position="1830"/>
    </location>
</feature>
<feature type="topological domain" description="Lumenal" evidence="6">
    <location>
        <begin position="1831"/>
        <end position="1832"/>
    </location>
</feature>
<feature type="transmembrane region" description="Helical" evidence="13">
    <location>
        <begin position="1833"/>
        <end position="1853"/>
    </location>
</feature>
<feature type="topological domain" description="Cytoplasmic" evidence="13">
    <location>
        <position position="1854"/>
    </location>
</feature>
<feature type="transmembrane region" description="Helical" evidence="13">
    <location>
        <begin position="1855"/>
        <end position="1875"/>
    </location>
</feature>
<feature type="topological domain" description="Lumenal" evidence="13">
    <location>
        <begin position="1876"/>
        <end position="1885"/>
    </location>
</feature>
<feature type="transmembrane region" description="Helical" evidence="13">
    <location>
        <begin position="1886"/>
        <end position="1906"/>
    </location>
</feature>
<feature type="topological domain" description="Cytoplasmic" evidence="13">
    <location>
        <begin position="1907"/>
        <end position="1976"/>
    </location>
</feature>
<feature type="intramembrane region" evidence="6">
    <location>
        <begin position="1977"/>
        <end position="2007"/>
    </location>
</feature>
<feature type="topological domain" description="Cytoplasmic" evidence="6">
    <location>
        <begin position="2008"/>
        <end position="3012"/>
    </location>
</feature>
<feature type="transmembrane region" description="Helical" evidence="6">
    <location>
        <begin position="3013"/>
        <end position="3033"/>
    </location>
</feature>
<feature type="domain" description="Peptidase C18" evidence="16">
    <location>
        <begin position="907"/>
        <end position="1030"/>
    </location>
</feature>
<feature type="domain" description="Peptidase S29" evidence="17">
    <location>
        <begin position="1031"/>
        <end position="1212"/>
    </location>
</feature>
<feature type="domain" description="Helicase ATP-binding" evidence="15">
    <location>
        <begin position="1221"/>
        <end position="1373"/>
    </location>
</feature>
<feature type="domain" description="RdRp catalytic" evidence="14">
    <location>
        <begin position="2656"/>
        <end position="2774"/>
    </location>
</feature>
<feature type="region of interest" description="Disordered" evidence="6">
    <location>
        <begin position="2"/>
        <end position="75"/>
    </location>
</feature>
<feature type="region of interest" description="Interaction with DDX3X" evidence="10">
    <location>
        <begin position="2"/>
        <end position="59"/>
    </location>
</feature>
<feature type="region of interest" description="Interaction with EIF2AK2/PKR" evidence="3">
    <location>
        <begin position="2"/>
        <end position="58"/>
    </location>
</feature>
<feature type="region of interest" description="Interaction with STAT1" evidence="3">
    <location>
        <begin position="2"/>
        <end position="23"/>
    </location>
</feature>
<feature type="region of interest" description="Important for endoplasmic reticulum and mitochondrial localization" evidence="3">
    <location>
        <begin position="112"/>
        <end position="152"/>
    </location>
</feature>
<feature type="region of interest" description="Interaction with APOA2" evidence="7">
    <location>
        <begin position="122"/>
        <end position="173"/>
    </location>
</feature>
<feature type="region of interest" description="Important for lipid droplets localization" evidence="6">
    <location>
        <begin position="164"/>
        <end position="167"/>
    </location>
</feature>
<feature type="region of interest" description="Important for fusion" evidence="6">
    <location>
        <begin position="265"/>
        <end position="296"/>
    </location>
</feature>
<feature type="region of interest" description="HVR1" evidence="6">
    <location>
        <begin position="385"/>
        <end position="411"/>
    </location>
</feature>
<feature type="region of interest" description="CD81-binding 1" evidence="4">
    <location>
        <begin position="484"/>
        <end position="496"/>
    </location>
</feature>
<feature type="region of interest" description="CD81-binding 2" evidence="4">
    <location>
        <begin position="524"/>
        <end position="555"/>
    </location>
</feature>
<feature type="region of interest" description="EIF2AK2/eIF2-alpha phosphorylation homology domain (PePHD)">
    <location>
        <begin position="664"/>
        <end position="675"/>
    </location>
</feature>
<feature type="region of interest" description="Protease NS2-3" evidence="4">
    <location>
        <begin position="908"/>
        <end position="1210"/>
    </location>
</feature>
<feature type="region of interest" description="Interaction with human SCPS1" evidence="27">
    <location>
        <begin position="933"/>
        <end position="953"/>
    </location>
</feature>
<feature type="region of interest" description="Disordered" evidence="18">
    <location>
        <begin position="1481"/>
        <end position="1501"/>
    </location>
</feature>
<feature type="region of interest" description="RNA-binding" evidence="4">
    <location>
        <begin position="1490"/>
        <end position="1501"/>
    </location>
</feature>
<feature type="region of interest" description="NS3-binding" evidence="6">
    <location>
        <begin position="1683"/>
        <end position="1694"/>
    </location>
</feature>
<feature type="region of interest" description="Glycine zipper" evidence="35">
    <location>
        <begin position="1837"/>
        <end position="1865"/>
    </location>
</feature>
<feature type="region of interest" description="Membrane-binding" evidence="6">
    <location>
        <begin position="1982"/>
        <end position="2002"/>
    </location>
</feature>
<feature type="region of interest" description="D1; RNA-binding" evidence="6">
    <location>
        <begin position="2009"/>
        <end position="2225"/>
    </location>
</feature>
<feature type="region of interest" description="Transcriptional activation" evidence="13">
    <location>
        <begin position="2124"/>
        <end position="2332"/>
    </location>
</feature>
<feature type="region of interest" description="FKBP8-binding" evidence="3">
    <location>
        <begin position="2124"/>
        <end position="2212"/>
    </location>
</feature>
<feature type="region of interest" description="Interaction with non-structural protein 4A" evidence="3">
    <location>
        <begin position="2139"/>
        <end position="2143"/>
    </location>
</feature>
<feature type="region of interest" description="Disordered" evidence="18">
    <location>
        <begin position="2192"/>
        <end position="2213"/>
    </location>
</feature>
<feature type="region of interest" description="ISDR" evidence="3">
    <location>
        <begin position="2210"/>
        <end position="2249"/>
    </location>
</feature>
<feature type="region of interest" description="Interaction with EIF2AK2/PKR" evidence="4">
    <location>
        <begin position="2214"/>
        <end position="2275"/>
    </location>
</feature>
<feature type="region of interest" description="D2" evidence="6">
    <location>
        <begin position="2227"/>
        <end position="2315"/>
    </location>
</feature>
<feature type="region of interest" description="Disordered" evidence="6">
    <location>
        <begin position="2228"/>
        <end position="2315"/>
    </location>
</feature>
<feature type="region of interest" description="NS4B-binding" evidence="13">
    <location>
        <begin position="2249"/>
        <end position="2306"/>
    </location>
</feature>
<feature type="region of interest" description="Interaction with human PPIA/CYPA" evidence="24">
    <location>
        <begin position="2281"/>
        <end position="2297"/>
    </location>
</feature>
<feature type="region of interest" description="D3" evidence="6">
    <location>
        <begin position="2329"/>
        <end position="2442"/>
    </location>
</feature>
<feature type="region of interest" description="Interaction with host IFI27" evidence="6">
    <location>
        <begin position="2336"/>
        <end position="2447"/>
    </location>
</feature>
<feature type="region of interest" description="Disordered" evidence="18">
    <location>
        <begin position="2352"/>
        <end position="2432"/>
    </location>
</feature>
<feature type="region of interest" description="V3">
    <location>
        <begin position="2358"/>
        <end position="2381"/>
    </location>
</feature>
<feature type="region of interest" description="Interaction with host VAPB" evidence="6">
    <location>
        <begin position="2371"/>
        <end position="2439"/>
    </location>
</feature>
<feature type="short sequence motif" description="Nuclear localization signal" evidence="29">
    <location>
        <begin position="5"/>
        <end position="13"/>
    </location>
</feature>
<feature type="short sequence motif" description="Nuclear localization signal" evidence="29">
    <location>
        <begin position="38"/>
        <end position="43"/>
    </location>
</feature>
<feature type="short sequence motif" description="Nuclear localization signal" evidence="29">
    <location>
        <begin position="58"/>
        <end position="64"/>
    </location>
</feature>
<feature type="short sequence motif" description="Nuclear localization signal" evidence="29">
    <location>
        <begin position="66"/>
        <end position="71"/>
    </location>
</feature>
<feature type="short sequence motif" description="DECH box" evidence="40 44">
    <location>
        <begin position="1320"/>
        <end position="1323"/>
    </location>
</feature>
<feature type="short sequence motif" description="SH3-binding" evidence="13">
    <location>
        <begin position="2322"/>
        <end position="2325"/>
    </location>
</feature>
<feature type="short sequence motif" description="Nuclear localization signal" evidence="3">
    <location>
        <begin position="2326"/>
        <end position="2334"/>
    </location>
</feature>
<feature type="compositionally biased region" description="Basic residues" evidence="18">
    <location>
        <begin position="7"/>
        <end position="16"/>
    </location>
</feature>
<feature type="compositionally biased region" description="Low complexity" evidence="18">
    <location>
        <begin position="32"/>
        <end position="47"/>
    </location>
</feature>
<feature type="compositionally biased region" description="Low complexity" evidence="18">
    <location>
        <begin position="2196"/>
        <end position="2213"/>
    </location>
</feature>
<feature type="compositionally biased region" description="Pro residues" evidence="18">
    <location>
        <begin position="2316"/>
        <end position="2326"/>
    </location>
</feature>
<feature type="compositionally biased region" description="Low complexity" evidence="18">
    <location>
        <begin position="2355"/>
        <end position="2379"/>
    </location>
</feature>
<feature type="compositionally biased region" description="Acidic residues" evidence="18">
    <location>
        <begin position="2398"/>
        <end position="2408"/>
    </location>
</feature>
<feature type="compositionally biased region" description="Gly residues" evidence="18">
    <location>
        <begin position="2417"/>
        <end position="2426"/>
    </location>
</feature>
<feature type="active site" description="For protease NS2 activity; shared with dimeric partner" evidence="16">
    <location>
        <position position="956"/>
    </location>
</feature>
<feature type="active site" description="For protease NS2 activity; shared with dimeric partner" evidence="16">
    <location>
        <position position="976"/>
    </location>
</feature>
<feature type="active site" description="For protease NS2 activity; shared with dimeric partner" evidence="16">
    <location>
        <position position="997"/>
    </location>
</feature>
<feature type="active site" description="Charge relay system; for serine protease NS3 activity" evidence="17">
    <location>
        <position position="1087"/>
    </location>
</feature>
<feature type="active site" description="Charge relay system; for serine protease NS3 activity" evidence="17">
    <location>
        <position position="1111"/>
    </location>
</feature>
<feature type="active site" description="Charge relay system; for serine protease NS3 activity" evidence="17">
    <location>
        <position position="1169"/>
    </location>
</feature>
<feature type="binding site" evidence="17">
    <location>
        <position position="1127"/>
    </location>
    <ligand>
        <name>Zn(2+)</name>
        <dbReference type="ChEBI" id="CHEBI:29105"/>
        <label>1</label>
        <note>structural</note>
    </ligand>
</feature>
<feature type="binding site" evidence="17">
    <location>
        <position position="1129"/>
    </location>
    <ligand>
        <name>Zn(2+)</name>
        <dbReference type="ChEBI" id="CHEBI:29105"/>
        <label>1</label>
        <note>structural</note>
    </ligand>
</feature>
<feature type="binding site" evidence="17">
    <location>
        <position position="1175"/>
    </location>
    <ligand>
        <name>Zn(2+)</name>
        <dbReference type="ChEBI" id="CHEBI:29105"/>
        <label>1</label>
        <note>structural</note>
    </ligand>
</feature>
<feature type="binding site" evidence="17">
    <location>
        <position position="1179"/>
    </location>
    <ligand>
        <name>Zn(2+)</name>
        <dbReference type="ChEBI" id="CHEBI:29105"/>
        <label>1</label>
        <note>structural</note>
    </ligand>
</feature>
<feature type="binding site" evidence="15">
    <location>
        <begin position="1234"/>
        <end position="1241"/>
    </location>
    <ligand>
        <name>ATP</name>
        <dbReference type="ChEBI" id="CHEBI:30616"/>
    </ligand>
</feature>
<feature type="binding site" evidence="12">
    <location>
        <position position="1241"/>
    </location>
    <ligand>
        <name>Mg(2+)</name>
        <dbReference type="ChEBI" id="CHEBI:18420"/>
        <label>1</label>
        <note>catalytic; for NS3 helicase activity</note>
    </ligand>
</feature>
<feature type="binding site" evidence="49">
    <location>
        <position position="1321"/>
    </location>
    <ligand>
        <name>Mg(2+)</name>
        <dbReference type="ChEBI" id="CHEBI:18420"/>
        <label>1</label>
        <note>catalytic; for NS3 helicase activity</note>
    </ligand>
</feature>
<feature type="binding site" evidence="12">
    <location>
        <position position="2015"/>
    </location>
    <ligand>
        <name>Zn(2+)</name>
        <dbReference type="ChEBI" id="CHEBI:29105"/>
        <label>2</label>
        <note>structural</note>
    </ligand>
</feature>
<feature type="binding site" evidence="12">
    <location>
        <position position="2033"/>
    </location>
    <ligand>
        <name>Zn(2+)</name>
        <dbReference type="ChEBI" id="CHEBI:29105"/>
        <label>2</label>
        <note>structural</note>
    </ligand>
</feature>
<feature type="binding site" evidence="12">
    <location>
        <position position="2035"/>
    </location>
    <ligand>
        <name>Zn(2+)</name>
        <dbReference type="ChEBI" id="CHEBI:29105"/>
        <label>2</label>
        <note>structural</note>
    </ligand>
</feature>
<feature type="binding site" evidence="12">
    <location>
        <position position="2056"/>
    </location>
    <ligand>
        <name>Zn(2+)</name>
        <dbReference type="ChEBI" id="CHEBI:29105"/>
        <label>2</label>
        <note>structural</note>
    </ligand>
</feature>
<feature type="binding site" evidence="4">
    <location>
        <position position="2662"/>
    </location>
    <ligand>
        <name>Mg(2+)</name>
        <dbReference type="ChEBI" id="CHEBI:18420"/>
        <label>2</label>
        <note>catalytic; for RNA-directed RNA polymerase activity</note>
    </ligand>
</feature>
<feature type="binding site" evidence="4">
    <location>
        <position position="2760"/>
    </location>
    <ligand>
        <name>Mg(2+)</name>
        <dbReference type="ChEBI" id="CHEBI:18420"/>
        <label>2</label>
        <note>catalytic; for RNA-directed RNA polymerase activity</note>
    </ligand>
</feature>
<feature type="binding site" evidence="4">
    <location>
        <position position="2761"/>
    </location>
    <ligand>
        <name>Mg(2+)</name>
        <dbReference type="ChEBI" id="CHEBI:18420"/>
        <label>2</label>
        <note>catalytic; for RNA-directed RNA polymerase activity</note>
    </ligand>
</feature>
<feature type="site" description="Cleavage; by signal peptide peptidase" evidence="3">
    <location>
        <begin position="177"/>
        <end position="178"/>
    </location>
</feature>
<feature type="site" description="Cleavage; by host signal peptidase" evidence="3">
    <location>
        <begin position="191"/>
        <end position="192"/>
    </location>
</feature>
<feature type="site" description="Cleavage; by host signal peptidase" evidence="3">
    <location>
        <begin position="383"/>
        <end position="384"/>
    </location>
</feature>
<feature type="site" description="Cleavage; by host signal peptidase" evidence="1">
    <location>
        <begin position="750"/>
        <end position="751"/>
    </location>
</feature>
<feature type="site" description="Cleavage; by host signal peptidase" evidence="1">
    <location>
        <begin position="813"/>
        <end position="814"/>
    </location>
</feature>
<feature type="site" description="Cleavage; by protease NS2" evidence="16">
    <location>
        <begin position="1030"/>
        <end position="1031"/>
    </location>
</feature>
<feature type="site" description="Cleavage; by serine protease/helicase NS3" evidence="6">
    <location>
        <begin position="1661"/>
        <end position="1662"/>
    </location>
</feature>
<feature type="site" description="Cleavage; by serine protease/helicase NS3" evidence="6">
    <location>
        <begin position="1715"/>
        <end position="1716"/>
    </location>
</feature>
<feature type="site" description="Cleavage; by serine protease/helicase NS3" evidence="6">
    <location>
        <begin position="1976"/>
        <end position="1977"/>
    </location>
</feature>
<feature type="site" description="Cleavage; by serine protease/helicase NS3" evidence="6">
    <location>
        <begin position="2442"/>
        <end position="2443"/>
    </location>
</feature>
<feature type="modified residue" description="N-acetylserine; by host" evidence="11">
    <location>
        <position position="2"/>
    </location>
</feature>
<feature type="modified residue" description="Phosphoserine; by host" evidence="8">
    <location>
        <position position="53"/>
    </location>
</feature>
<feature type="modified residue" description="Phosphoserine; by host" evidence="8">
    <location>
        <position position="99"/>
    </location>
</feature>
<feature type="modified residue" description="Phosphoserine; by host PKA" evidence="8">
    <location>
        <position position="116"/>
    </location>
</feature>
<feature type="modified residue" description="Phosphotyrosine; by host" evidence="41">
    <location>
        <position position="2069"/>
    </location>
</feature>
<feature type="modified residue" description="Phosphoserine; by host; in p56" evidence="30 31">
    <location>
        <position position="2198"/>
    </location>
</feature>
<feature type="modified residue" description="Phosphoserine; by host; in p58" evidence="3">
    <location>
        <position position="2201"/>
    </location>
</feature>
<feature type="modified residue" description="Phosphoserine; by host; in p56 and p58, regulates intracellular NS5A distribution" evidence="39 44">
    <location>
        <position position="2205"/>
    </location>
</feature>
<feature type="modified residue" description="Phosphoserine; by host; in p58" evidence="31 39 44">
    <location>
        <position position="2208"/>
    </location>
</feature>
<feature type="modified residue" description="Phosphoserine; by host; in p58" evidence="30 31 39 44">
    <location>
        <position position="2211"/>
    </location>
</feature>
<feature type="modified residue" description="Phosphoserine; by host; in p58" evidence="44">
    <location>
        <position position="2214"/>
    </location>
</feature>
<feature type="modified residue" description="Phosphothreonine; by host" evidence="30">
    <location>
        <position position="2324"/>
    </location>
</feature>
<feature type="lipid moiety-binding region" description="S-palmitoyl cysteine; by host" evidence="6">
    <location>
        <position position="926"/>
    </location>
</feature>
<feature type="lipid moiety-binding region" description="S-palmitoyl cysteine; by host" evidence="6">
    <location>
        <position position="1972"/>
    </location>
</feature>
<feature type="lipid moiety-binding region" description="S-palmitoyl cysteine; by host; partial" evidence="6">
    <location>
        <position position="1976"/>
    </location>
</feature>
<feature type="glycosylation site" description="N-linked (GlcNAc...) asparagine; by host" evidence="6">
    <location>
        <position position="196"/>
    </location>
</feature>
<feature type="glycosylation site" description="N-linked (GlcNAc...) asparagine; by host" evidence="6">
    <location>
        <position position="209"/>
    </location>
</feature>
<feature type="glycosylation site" description="N-linked (GlcNAc...) asparagine; by host" evidence="6">
    <location>
        <position position="234"/>
    </location>
</feature>
<feature type="glycosylation site" description="N-linked (GlcNAc...) asparagine; by host" evidence="6">
    <location>
        <position position="305"/>
    </location>
</feature>
<feature type="glycosylation site" description="N-linked (GlcNAc...) (high mannose) asparagine; by host" evidence="6">
    <location>
        <position position="417"/>
    </location>
</feature>
<feature type="glycosylation site" description="N-linked (GlcNAc...) (high mannose) asparagine; by host" evidence="6">
    <location>
        <position position="423"/>
    </location>
</feature>
<feature type="glycosylation site" description="N-linked (GlcNAc...) (high mannose) asparagine; by host" evidence="6">
    <location>
        <position position="430"/>
    </location>
</feature>
<feature type="glycosylation site" description="N-linked (GlcNAc...) (high mannose) asparagine; by host" evidence="6">
    <location>
        <position position="448"/>
    </location>
</feature>
<feature type="glycosylation site" description="N-linked (GlcNAc...) (high mannose) asparagine; by host" evidence="6">
    <location>
        <position position="477"/>
    </location>
</feature>
<feature type="glycosylation site" description="N-linked (GlcNAc...) (high mannose) asparagine; by host" evidence="6">
    <location>
        <position position="534"/>
    </location>
</feature>
<feature type="glycosylation site" description="N-linked (GlcNAc...) (high mannose) asparagine; by host" evidence="6">
    <location>
        <position position="542"/>
    </location>
</feature>
<feature type="glycosylation site" description="N-linked (GlcNAc...) (high mannose) asparagine; by host" evidence="6">
    <location>
        <position position="558"/>
    </location>
</feature>
<feature type="glycosylation site" description="N-linked (GlcNAc...) (high mannose) asparagine; by host" evidence="6">
    <location>
        <position position="578"/>
    </location>
</feature>
<feature type="glycosylation site" description="N-linked (GlcNAc...) (high mannose) asparagine; by host" evidence="6">
    <location>
        <position position="627"/>
    </location>
</feature>
<feature type="glycosylation site" description="N-linked (GlcNAc...) (high mannose) asparagine; by host" evidence="6">
    <location>
        <position position="649"/>
    </location>
</feature>
<feature type="disulfide bond" evidence="6">
    <location>
        <begin position="429"/>
        <end position="554"/>
    </location>
</feature>
<feature type="disulfide bond" evidence="6">
    <location>
        <begin position="452"/>
        <end position="459"/>
    </location>
</feature>
<feature type="disulfide bond" evidence="6">
    <location>
        <begin position="488"/>
        <end position="496"/>
    </location>
</feature>
<feature type="disulfide bond" evidence="6">
    <location>
        <begin position="505"/>
        <end position="510"/>
    </location>
</feature>
<feature type="disulfide bond" evidence="6">
    <location>
        <begin position="566"/>
        <end position="571"/>
    </location>
</feature>
<feature type="disulfide bond" evidence="6">
    <location>
        <begin position="585"/>
        <end position="589"/>
    </location>
</feature>
<feature type="disulfide bond" evidence="6">
    <location>
        <begin position="601"/>
        <end position="624"/>
    </location>
</feature>
<feature type="disulfide bond" evidence="6">
    <location>
        <begin position="611"/>
        <end position="648"/>
    </location>
</feature>
<feature type="disulfide bond" evidence="6">
    <location>
        <begin position="656"/>
        <end position="681"/>
    </location>
</feature>
<feature type="cross-link" description="Glycyl lysine isopeptide (Lys-Gly) (interchain with G-Cter in ubiquitin)" evidence="6">
    <location>
        <position position="2350"/>
    </location>
</feature>
<feature type="mutagenesis site" description="Cleaves ATP 50% slower and unwinds DNA 18% more slowly." evidence="40">
    <original>C</original>
    <variation>A</variation>
    <location>
        <position position="1322"/>
    </location>
</feature>
<feature type="mutagenesis site" description="No effect on NS3 helicase activity; 50% decreased in nucleic acid binding; decreases the affinity of NS3 helicase for Mg2+ by 2 orders of magnitude." evidence="40">
    <original>C</original>
    <variation>G</variation>
    <location>
        <position position="1322"/>
    </location>
</feature>
<feature type="mutagenesis site" description="Slight reduction in infectivity." evidence="37">
    <original>P</original>
    <variation>A</variation>
    <location>
        <position position="2011"/>
    </location>
</feature>
<feature type="mutagenesis site" description="Complete loss of viral replication." evidence="37">
    <original>Y</original>
    <variation>A</variation>
    <location>
        <position position="2019"/>
    </location>
</feature>
<feature type="mutagenesis site" description="Complete loss of viral replication." evidence="37">
    <original>G</original>
    <variation>A</variation>
    <location>
        <position position="2021"/>
    </location>
</feature>
<feature type="mutagenesis site" description="Complete loss of viral replication." evidence="37">
    <original>W</original>
    <variation>A</variation>
    <location>
        <position position="2023"/>
    </location>
</feature>
<feature type="mutagenesis site" description="Complete loss of viral replication." evidence="37">
    <original>G</original>
    <variation>A</variation>
    <location>
        <position position="2027"/>
    </location>
</feature>
<feature type="mutagenesis site" description="Complete loss of viral replication." evidence="37">
    <original>C</original>
    <variation>A</variation>
    <location>
        <position position="2035"/>
    </location>
</feature>
<feature type="mutagenesis site" description="Complete loss of viral replication." evidence="37">
    <original>G</original>
    <variation>A</variation>
    <location>
        <position position="2036"/>
    </location>
</feature>
<feature type="mutagenesis site" description="Complete loss of virus production. Disrupts the dimerization and localization of NS5A to lipid droplets. NS5A binding to HCV 3'UTR RNA." evidence="37">
    <original>V</original>
    <variation>A</variation>
    <location>
        <position position="2043"/>
    </location>
</feature>
<feature type="mutagenesis site" description="Complete loss of viral replication." evidence="37">
    <original>G</original>
    <variation>A</variation>
    <location>
        <position position="2072"/>
    </location>
</feature>
<feature type="mutagenesis site" description="Complete loss of viral replication." evidence="37">
    <original>T</original>
    <variation>A</variation>
    <location>
        <position position="2110"/>
    </location>
</feature>
<feature type="mutagenesis site" description="Complete loss of virus production. Disrupts the dimerization and localization of NS5A to lipid droplets. Increased affinity of NS5A binding to HCV 3'UTR RNA." evidence="37">
    <original>P</original>
    <variation>A</variation>
    <location>
        <position position="2121"/>
    </location>
</feature>
<feature type="mutagenesis site" description="Complete loss of phosphorylation at S-2205, S-2208 and S-2211." evidence="31">
    <original>S</original>
    <variation>A</variation>
    <location>
        <position position="2205"/>
    </location>
</feature>
<feature type="mutagenesis site" description="Complete loss of phosphorylation at S-2208 and S-2211." evidence="31">
    <original>S</original>
    <variation>A</variation>
    <location>
        <position position="2208"/>
    </location>
</feature>
<feature type="mutagenesis site" description="Complete loss of phosphorylation of S-2211. Increases phosphorylation of S-2205. Complete loss of infectivity." evidence="30 44">
    <original>S</original>
    <variation>A</variation>
    <location>
        <position position="2211"/>
    </location>
</feature>
<feature type="mutagenesis site" description="Alters virus-induced membrane rearrangements, no effect on virus infectivity." evidence="30">
    <original>S</original>
    <variation>D</variation>
    <location>
        <position position="2211"/>
    </location>
</feature>
<feature type="mutagenesis site" description="No loss of its RNA-binding ability or interaction with human PPIA/CYPA but loss of PPIA/CYPA-mediated stimulation of its RNA-binding ability; alone or when associated with N-2293." evidence="24">
    <original>D</original>
    <variation>E</variation>
    <location>
        <position position="2292"/>
    </location>
</feature>
<feature type="mutagenesis site" description="No loss of its RNA-binding ability or interaction with human PPIA/CYPA but loss of PPIA/CYPA-mediated stimulation of its RNA-binding ability; when associated with E-2292." evidence="24">
    <original>Y</original>
    <variation>N</variation>
    <location>
        <position position="2293"/>
    </location>
</feature>
<feature type="mutagenesis site" description="No effect on viral replication and virus production." evidence="30">
    <original>T</original>
    <variation>A</variation>
    <variation>D</variation>
    <location>
        <position position="2324"/>
    </location>
</feature>
<feature type="mutagenesis site" description="Complete loss of interaction with mature core protein." evidence="21">
    <original>SWSTCS</original>
    <variation>AWATCA</variation>
    <location>
        <begin position="2428"/>
        <end position="2433"/>
    </location>
</feature>
<feature type="mutagenesis site" description="No effect on the interaction with mature core protein." evidence="21">
    <original>SWS</original>
    <variation>EWE</variation>
    <location>
        <begin position="2428"/>
        <end position="2430"/>
    </location>
</feature>
<feature type="helix" evidence="51">
    <location>
        <begin position="175"/>
        <end position="185"/>
    </location>
</feature>
<feature type="helix" evidence="51">
    <location>
        <begin position="189"/>
        <end position="194"/>
    </location>
</feature>
<feature type="helix" evidence="58">
    <location>
        <begin position="537"/>
        <end position="541"/>
    </location>
</feature>
<feature type="helix" evidence="50">
    <location>
        <begin position="692"/>
        <end position="701"/>
    </location>
</feature>
<feature type="turn" evidence="50">
    <location>
        <begin position="702"/>
        <end position="706"/>
    </location>
</feature>
<feature type="helix" evidence="50">
    <location>
        <begin position="710"/>
        <end position="714"/>
    </location>
</feature>
<feature type="turn" evidence="50">
    <location>
        <begin position="715"/>
        <end position="718"/>
    </location>
</feature>
<feature type="helix" evidence="52">
    <location>
        <begin position="1719"/>
        <end position="1748"/>
    </location>
</feature>
<feature type="strand" evidence="54">
    <location>
        <begin position="2444"/>
        <end position="2448"/>
    </location>
</feature>
<feature type="helix" evidence="54">
    <location>
        <begin position="2467"/>
        <end position="2470"/>
    </location>
</feature>
<feature type="helix" evidence="54">
    <location>
        <begin position="2476"/>
        <end position="2478"/>
    </location>
</feature>
<feature type="strand" evidence="54">
    <location>
        <begin position="2479"/>
        <end position="2481"/>
    </location>
</feature>
<feature type="helix" evidence="54">
    <location>
        <begin position="2484"/>
        <end position="2486"/>
    </location>
</feature>
<feature type="helix" evidence="54">
    <location>
        <begin position="2487"/>
        <end position="2494"/>
    </location>
</feature>
<feature type="helix" evidence="54">
    <location>
        <begin position="2504"/>
        <end position="2517"/>
    </location>
</feature>
<feature type="helix" evidence="54">
    <location>
        <begin position="2527"/>
        <end position="2532"/>
    </location>
</feature>
<feature type="strand" evidence="59">
    <location>
        <begin position="2542"/>
        <end position="2544"/>
    </location>
</feature>
<feature type="helix" evidence="54">
    <location>
        <begin position="2547"/>
        <end position="2552"/>
    </location>
</feature>
<feature type="helix" evidence="54">
    <location>
        <begin position="2557"/>
        <end position="2570"/>
    </location>
</feature>
<feature type="strand" evidence="53">
    <location>
        <begin position="2572"/>
        <end position="2574"/>
    </location>
</feature>
<feature type="strand" evidence="54">
    <location>
        <begin position="2578"/>
        <end position="2582"/>
    </location>
</feature>
<feature type="strand" evidence="54">
    <location>
        <begin position="2586"/>
        <end position="2588"/>
    </location>
</feature>
<feature type="helix" evidence="54">
    <location>
        <begin position="2591"/>
        <end position="2593"/>
    </location>
</feature>
<feature type="strand" evidence="54">
    <location>
        <begin position="2601"/>
        <end position="2604"/>
    </location>
</feature>
<feature type="helix" evidence="54">
    <location>
        <begin position="2607"/>
        <end position="2629"/>
    </location>
</feature>
<feature type="helix" evidence="54">
    <location>
        <begin position="2630"/>
        <end position="2632"/>
    </location>
</feature>
<feature type="helix" evidence="54">
    <location>
        <begin position="2634"/>
        <end position="2636"/>
    </location>
</feature>
<feature type="helix" evidence="54">
    <location>
        <begin position="2639"/>
        <end position="2651"/>
    </location>
</feature>
<feature type="strand" evidence="54">
    <location>
        <begin position="2653"/>
        <end position="2663"/>
    </location>
</feature>
<feature type="helix" evidence="54">
    <location>
        <begin position="2666"/>
        <end position="2669"/>
    </location>
</feature>
<feature type="helix" evidence="54">
    <location>
        <begin position="2672"/>
        <end position="2684"/>
    </location>
</feature>
<feature type="helix" evidence="54">
    <location>
        <begin position="2689"/>
        <end position="2701"/>
    </location>
</feature>
<feature type="turn" evidence="54">
    <location>
        <begin position="2702"/>
        <end position="2704"/>
    </location>
</feature>
<feature type="strand" evidence="54">
    <location>
        <begin position="2706"/>
        <end position="2709"/>
    </location>
</feature>
<feature type="strand" evidence="54">
    <location>
        <begin position="2715"/>
        <end position="2719"/>
    </location>
</feature>
<feature type="helix" evidence="54">
    <location>
        <begin position="2729"/>
        <end position="2748"/>
    </location>
</feature>
<feature type="strand" evidence="54">
    <location>
        <begin position="2754"/>
        <end position="2758"/>
    </location>
</feature>
<feature type="strand" evidence="54">
    <location>
        <begin position="2761"/>
        <end position="2767"/>
    </location>
</feature>
<feature type="helix" evidence="54">
    <location>
        <begin position="2771"/>
        <end position="2787"/>
    </location>
</feature>
<feature type="strand" evidence="54">
    <location>
        <begin position="2792"/>
        <end position="2794"/>
    </location>
</feature>
<feature type="strand" evidence="54">
    <location>
        <begin position="2799"/>
        <end position="2801"/>
    </location>
</feature>
<feature type="helix" evidence="54">
    <location>
        <begin position="2802"/>
        <end position="2804"/>
    </location>
</feature>
<feature type="strand" evidence="54">
    <location>
        <begin position="2810"/>
        <end position="2816"/>
    </location>
</feature>
<feature type="helix" evidence="54">
    <location>
        <begin position="2818"/>
        <end position="2820"/>
    </location>
</feature>
<feature type="strand" evidence="54">
    <location>
        <begin position="2822"/>
        <end position="2828"/>
    </location>
</feature>
<feature type="helix" evidence="54">
    <location>
        <begin position="2831"/>
        <end position="2842"/>
    </location>
</feature>
<feature type="strand" evidence="54">
    <location>
        <begin position="2846"/>
        <end position="2849"/>
    </location>
</feature>
<feature type="helix" evidence="54">
    <location>
        <begin position="2850"/>
        <end position="2856"/>
    </location>
</feature>
<feature type="turn" evidence="54">
    <location>
        <begin position="2857"/>
        <end position="2859"/>
    </location>
</feature>
<feature type="helix" evidence="54">
    <location>
        <begin position="2861"/>
        <end position="2865"/>
    </location>
</feature>
<feature type="helix" evidence="54">
    <location>
        <begin position="2867"/>
        <end position="2878"/>
    </location>
</feature>
<feature type="strand" evidence="56">
    <location>
        <begin position="2881"/>
        <end position="2883"/>
    </location>
</feature>
<feature type="strand" evidence="54">
    <location>
        <begin position="2885"/>
        <end position="2889"/>
    </location>
</feature>
<feature type="strand" evidence="54">
    <location>
        <begin position="2892"/>
        <end position="2896"/>
    </location>
</feature>
<feature type="helix" evidence="54">
    <location>
        <begin position="2898"/>
        <end position="2900"/>
    </location>
</feature>
<feature type="helix" evidence="54">
    <location>
        <begin position="2901"/>
        <end position="2909"/>
    </location>
</feature>
<feature type="helix" evidence="54">
    <location>
        <begin position="2911"/>
        <end position="2914"/>
    </location>
</feature>
<feature type="helix" evidence="54">
    <location>
        <begin position="2921"/>
        <end position="2934"/>
    </location>
</feature>
<feature type="helix" evidence="54">
    <location>
        <begin position="2939"/>
        <end position="2955"/>
    </location>
</feature>
<feature type="helix" evidence="54">
    <location>
        <begin position="2958"/>
        <end position="2967"/>
    </location>
</feature>
<feature type="helix" evidence="54">
    <location>
        <begin position="2969"/>
        <end position="2971"/>
    </location>
</feature>
<feature type="strand" evidence="57">
    <location>
        <begin position="2972"/>
        <end position="2974"/>
    </location>
</feature>
<feature type="helix" evidence="54">
    <location>
        <begin position="2982"/>
        <end position="2986"/>
    </location>
</feature>
<feature type="helix" evidence="54">
    <location>
        <begin position="2992"/>
        <end position="2996"/>
    </location>
</feature>
<feature type="helix" evidence="55">
    <location>
        <begin position="2998"/>
        <end position="3000"/>
    </location>
</feature>
<feature type="strand" evidence="59">
    <location>
        <begin position="3002"/>
        <end position="3004"/>
    </location>
</feature>
<accession>Q99IB8</accession>
<proteinExistence type="evidence at protein level"/>
<comment type="function">
    <molecule>Mature core protein</molecule>
    <text evidence="3 5 6 7 21 46">Packages viral RNA to form a viral nucleocapsid, and promotes virion budding (Probable). Participates in the viral particle production as a result of its interaction with the non-structural protein 5A (PubMed:18524832). Binds RNA and may function as a RNA chaperone to induce the RNA structural rearrangements taking place during virus replication (By similarity). Modulates viral translation initiation by interacting with viral IRES and 40S ribosomal subunit (By similarity). Affects various cell signaling pathways, host immunity and lipid metabolism (Probable). Prevents the establishment of cellular antiviral state by blocking the interferon-alpha/beta (IFN-alpha/beta) and IFN-gamma signaling pathways and by blocking the formation of phosphorylated STAT1 and promoting ubiquitin-mediated proteasome-dependent degradation of STAT1 (By similarity). Activates STAT3 leading to cellular transformation (By similarity). Regulates the activity of cellular genes, including c-myc and c-fos (By similarity). May repress the promoter of p53, and sequester CREB3 and SP110 isoform 3/Sp110b in the cytoplasm (By similarity). Represses cell cycle negative regulating factor CDKN1A, thereby interrupting an important check point of normal cell cycle regulation (By similarity). Targets transcription factors involved in the regulation of inflammatory responses and in the immune response: suppresses NF-kappa-B activation, and activates AP-1 (By similarity). Binds to dendritic cells (DCs) via C1QR1, resulting in down-regulation of T-lymphocytes proliferation (By similarity). Alters lipid metabolism by interacting with hepatocellular proteins involved in lipid accumulation and storage (By similarity). Induces up-regulation of FAS promoter activity, and thereby contributes to the increased triglyceride accumulation in hepatocytes (steatosis) (By similarity).</text>
</comment>
<comment type="function">
    <molecule>Envelope glycoprotein E1</molecule>
    <text evidence="6 20">Forms a heterodimer with envelope glycoprotein E2, which mediates virus attachment to the host cell, virion internalization through clathrin-dependent endocytosis and fusion with host membrane (By similarity). Fusion with the host cell is most likely mediated by both E1 and E2, through conformational rearrangements of the heterodimer required for fusion rather than a classical class II fusion mechanism (By similarity). E1/E2 heterodimer binds host apolipoproteins such as APOB and APOE thereby forming a lipo-viro-particle (LVP) (By similarity). APOE associated to the LVP allows the initial virus attachment to cell surface receptors such as the heparan sulfate proteoglycans (HSPGs), syndecan-1 (SDC1), syndecan-1 (SDC2), the low-density lipoprotein receptor (LDLR) and scavenger receptor class B type I (SCARB1) (By similarity). The cholesterol transfer activity of SCARB1 allows E2 exposure and binding of E2 to SCARB1 and the tetraspanin CD81 (By similarity). E1/E2 heterodimer binding on CD81 activates the epithelial growth factor receptor (EGFR) signaling pathway (By similarity). Diffusion of the complex E1-E2-EGFR-SCARB1-CD81 to the cell lateral membrane allows further interaction with Claudin 1 (CLDN1) and occludin (OCLN) to finally trigger HCV entry (By similarity) (PubMed:17325668).</text>
</comment>
<comment type="function">
    <molecule>Envelope glycoprotein E2</molecule>
    <text evidence="5 6 20">Forms a heterodimer with envelope glycoprotein E1, which mediates virus attachment to the host cell, virion internalization through clathrin-dependent endocytosis and fusion with host membrane (By similarity). Fusion with the host cell is most likely mediated by both E1 and E2, through conformational rearrangements of the heterodimer required for fusion rather than a classical class II fusion mechanism (By similarity). The interaction between envelope glycoprotein E2 and host apolipoprotein E/APOE allows the proper assembly, maturation and infectivity of the viral particles (By similarity). This interaction is probably promoted via the up-regulation of cellular autophagy by the virus (By similarity). E1/E2 heterodimer binds host apolipoproteins such as APOB and APOE thereby forming a lipo-viro-particle (LVP) (By similarity). APOE associated to the LVP allows the initial virus attachment to cell surface receptors such as the heparan sulfate proteoglycans (HSPGs), syndecan-1 (SDC1), syndecan-1 (SDC2), the low-density lipoprotein receptor (LDLR) and scavenger receptor class B type I (SCARB1) (By similarity). The cholesterol transfer activity of SCARB1 allows E2 exposure and binding of E2 to SCARB1 and the tetraspanin CD81 (By similarity). E1/E2 heterodimer binding on CD81 activates the epithelial growth factor receptor (EGFR) signaling pathway (By similarity). Diffusion of the complex E1-E2-EGFR-SCARB1-CD81 to the cell lateral membrane allows further interaction with Claudin 1 (CLDN1) and occludin (OCLN) to finally trigger HCV entry (By similarity) (PubMed:17325668). Inhibits host EIF2AK2/PKR activation, preventing the establishment of an antiviral state (By similarity). Viral ligand for CD209/DC-SIGN and CLEC4M/DC-SIGNR, which are respectively found on dendritic cells (DCs), and on liver sinusoidal endothelial cells and macrophage-like cells of lymph node sinuses (By similarity). These interactions allow the capture of circulating HCV particles by these cells and subsequent facilitated transmission to permissive cells such as hepatocytes and lymphocyte subpopulations (By similarity). The interaction between E2 and host amino acid transporter complex formed by SLC3A2 and SLC7A5/LAT1 may facilitate viral entry into host cell (By similarity).</text>
</comment>
<comment type="function">
    <molecule>Viroporin p7</molecule>
    <text evidence="6 36 46">Ion channel protein that acts as a viroporin and plays an essential role in the assembly, envelopment and secretion of viral particles (PubMed:29253880). Regulates the host cell secretory pathway, which induces the intracellular retention of viral glycoproteins and favors assembly of viral particles (PubMed:29253880). Creates a pore in acidic organelles and releases Ca(2+) and H(+) in the cytoplasm of infected cells, leading to a productive viral infection (By similarity). High levels of cytoplasmic Ca(2+) may trigger membrane trafficking and transport of viral ER-associated proteins to viroplasms, sites of viral genome replication (Probable). This ionic imbalance induces the assembly of the inflammasome complex, which triggers the maturation of pro-IL-1beta into IL-1beta through the action of caspase-1 (By similarity). Targets also host mitochondria and induces mitochondrial depolarization (By similarity). In addition of its role as a viroporin, acts as a lipid raft adhesion factor (By similarity).</text>
</comment>
<comment type="function">
    <molecule>Protease NS2</molecule>
    <text evidence="4 6 23 42">Cysteine protease required for the proteolytic auto-cleavage between the non-structural proteins NS2 and NS3 (By similarity). The N-terminus of NS3 is required for the function of NS2 protease (active region NS2-3) (By similarity). Promotes the initiation of viral particle assembly by mediating the interaction between structural and non-structural proteins (PubMed:21347350, PubMed:31121874).</text>
</comment>
<comment type="function">
    <molecule>Serine protease/helicase NS3</molecule>
    <text evidence="6 12 34">Displays three enzymatic activities: serine protease with a chymotrypsin-like fold, NTPase and RNA helicase (By similarity). NS3 serine protease, in association with NS4A, is responsible for the cleavages of NS3-NS4A, NS4A-NS4B, NS4B-NS5A and NS5A-NS5B (By similarity). The NS3/NS4A complex prevents phosphorylation of host IRF3, thus preventing the establishment of dsRNA induced antiviral state (By similarity). The NS3/NS4A complex induces host amino acid transporter component SLC3A2, thus contributing to HCV propagation (By similarity). NS3 RNA helicase binds to RNA and unwinds both dsDNA and dsRNA in the 3' to 5' direction, and likely resolves RNA complicated stable secondary structures in the template strand (PubMed:29070684). Binds a single ATP and catalyzes the unzipping of a single base pair of dsRNA (By similarity). Inhibits host antiviral proteins TBK1 and IRF3 thereby preventing the establishment of an antiviral state (By similarity). Cleaves host MAVS/CARDIF thereby preventing the establishment of an antiviral state (By similarity). Cleaves host TICAM1/TRIF, thereby disrupting TLR3 signaling and preventing the establishment of an antiviral state (By similarity).</text>
</comment>
<comment type="function">
    <molecule>Non-structural protein 4A</molecule>
    <text evidence="6 12">Peptide cofactor which forms a non-covalent complex with the N-terminal of NS3 serine protease (By similarity). The NS3/NS4A complex prevents phosphorylation of host IRF3, thus preventing the establishment of dsRNA induced antiviral state (By similarity). The NS3/NS4A complex induces host amino acid transporter component SLC3A2, thus contributing to HCV propagation (By similarity).</text>
</comment>
<comment type="function">
    <molecule>Non-structural protein 4B</molecule>
    <text evidence="6 35">Induces a specific membrane alteration that serves as a scaffold for the virus replication complex (PubMed:29167346). This membrane alteration gives rise to the so-called ER-derived membranous web that contains the replication complex (PubMed:29167346). NS4B self-interaction contributes to its function in membranous web formation (PubMed:29167346). Promotes host TRIF protein degradation in a CASP8-dependent manner thereby inhibiting host TLR3-mediated interferon signaling (By similarity). Disrupts the interaction between STING and TBK1 contributing to the inhibition of interferon signaling (By similarity).</text>
</comment>
<comment type="function">
    <molecule>Non-structural protein 5A</molecule>
    <text evidence="3 5 6 12 21 22 40 44">Phosphorylated protein that is indispensable for viral replication and assembly (PubMed:31511391). Both hypo- and hyperphosphorylated states are required for the viral life cycle (PubMed:31511391). The hyperphosphorylated form of NS5A is an inhibitor of viral replication (By similarity). Involved in RNA-binding and especially in binding to the viral genome (PubMed:20592076). Zinc is essential for RNA-binding (By similarity). Participates in the viral particle production as a result of its interaction with the viral mature core protein (PubMed:18524832). Its interaction with host VAPB may target the viral replication complex to vesicles (By similarity). Down-regulates viral IRES translation initiation (By similarity). Mediates interferon resistance, presumably by interacting with and inhibiting host EIF2AK2/PKR (By similarity). Prevents BIN1-induced apoptosis (By similarity). Acts as a transcriptional activator of some host genes important for viral replication when localized in the nucleus (By similarity) (PubMed:30281972). Via the interaction with host PACSIN2, modulates lipid droplet formation in order to promote virion assembly (By similarity). Modulates TNFRSF21/DR6 signaling pathway for viral propagation (By similarity).</text>
</comment>
<comment type="function">
    <molecule>RNA-directed RNA polymerase</molecule>
    <text evidence="6">RNA-dependent RNA polymerase that performs primer-template recognition and RNA synthesis during viral replication. Initiates RNA transcription/replication at a flavin adenine dinucleotide (FAD), resulting in a 5'- FAD cap on viral RNAs. In this way, recognition of viral 5' RNA by host pattern recognition receptors can be bypassed, thereby evading activation of antiviral pathways.</text>
</comment>
<comment type="catalytic activity">
    <molecule>Serine protease/helicase NS3</molecule>
    <reaction evidence="6">
        <text>Hydrolysis of four peptide bonds in the viral precursor polyprotein, commonly with Asp or Glu in the P6 position, Cys or Thr in P1 and Ser or Ala in P1'.</text>
        <dbReference type="EC" id="3.4.21.98"/>
    </reaction>
</comment>
<comment type="catalytic activity">
    <molecule>Serine protease/helicase NS3</molecule>
    <reaction evidence="34 40">
        <text>a ribonucleoside 5'-triphosphate + H2O = a ribonucleoside 5'-diphosphate + phosphate + H(+)</text>
        <dbReference type="Rhea" id="RHEA:23680"/>
        <dbReference type="ChEBI" id="CHEBI:15377"/>
        <dbReference type="ChEBI" id="CHEBI:15378"/>
        <dbReference type="ChEBI" id="CHEBI:43474"/>
        <dbReference type="ChEBI" id="CHEBI:57930"/>
        <dbReference type="ChEBI" id="CHEBI:61557"/>
        <dbReference type="EC" id="3.6.1.15"/>
    </reaction>
</comment>
<comment type="catalytic activity">
    <molecule>Serine protease/helicase NS3</molecule>
    <reaction evidence="34 40">
        <text>ATP + H2O = ADP + phosphate + H(+)</text>
        <dbReference type="Rhea" id="RHEA:13065"/>
        <dbReference type="ChEBI" id="CHEBI:15377"/>
        <dbReference type="ChEBI" id="CHEBI:15378"/>
        <dbReference type="ChEBI" id="CHEBI:30616"/>
        <dbReference type="ChEBI" id="CHEBI:43474"/>
        <dbReference type="ChEBI" id="CHEBI:456216"/>
        <dbReference type="EC" id="3.6.4.13"/>
    </reaction>
</comment>
<comment type="catalytic activity">
    <molecule>RNA-directed RNA polymerase</molecule>
    <reaction evidence="14">
        <text>RNA(n) + a ribonucleoside 5'-triphosphate = RNA(n+1) + diphosphate</text>
        <dbReference type="Rhea" id="RHEA:21248"/>
        <dbReference type="Rhea" id="RHEA-COMP:14527"/>
        <dbReference type="Rhea" id="RHEA-COMP:17342"/>
        <dbReference type="ChEBI" id="CHEBI:33019"/>
        <dbReference type="ChEBI" id="CHEBI:61557"/>
        <dbReference type="ChEBI" id="CHEBI:140395"/>
        <dbReference type="EC" id="2.7.7.48"/>
    </reaction>
</comment>
<comment type="cofactor">
    <molecule>Protease NS2</molecule>
    <cofactor evidence="4">
        <name>Zn(2+)</name>
        <dbReference type="ChEBI" id="CHEBI:29105"/>
    </cofactor>
    <text evidence="4">Activity of protease NS2 is dependent on zinc ions and completely inhibited by EDTA. This is probably due to the fact that NS2 protease activity needs NS3 N-terminus that binds a zinc atom (active region NS2-3).</text>
</comment>
<comment type="cofactor">
    <molecule>Serine protease/helicase NS3</molecule>
    <cofactor evidence="4">
        <name>Zn(2+)</name>
        <dbReference type="ChEBI" id="CHEBI:29105"/>
    </cofactor>
    <cofactor evidence="12">
        <name>Mg(2+)</name>
        <dbReference type="ChEBI" id="CHEBI:18420"/>
    </cofactor>
    <text evidence="4 12">Binds 1 zinc ion, which has a structural role (By similarity). The magnesium ion is essential for the helicase activity (By similarity).</text>
</comment>
<comment type="cofactor">
    <molecule>RNA-directed RNA polymerase</molecule>
    <cofactor evidence="4">
        <name>Mg(2+)</name>
        <dbReference type="ChEBI" id="CHEBI:18420"/>
    </cofactor>
    <text evidence="4">Binds 2 magnesium ion that constitute a dinuclear catalytic metal center.</text>
</comment>
<comment type="activity regulation">
    <text evidence="3 6">Inhibited by the antiviral drug hexamethylene amiloride (By similarity). Inhibition by amantadine appears to be genotype-dependent (By similarity). Also inhibited by long-alkyl-chain iminosugar derivatives (By similarity).</text>
</comment>
<comment type="activity regulation">
    <molecule>RNA-directed RNA polymerase</molecule>
    <text evidence="6">Activity is up-regulated by PRK2/PKN2-mediated phosphorylation.</text>
</comment>
<comment type="subunit">
    <molecule>Mature core protein</molecule>
    <text evidence="3 6 7 9 10 21 38 42">Homooligomer (By similarity). Interacts with E1 (via C-terminus) (By similarity). Interacts with the non-structural protein 5A (PubMed:18524832). Interacts (via N-terminus) with host STAT1 (via SH2 domain); this interaction results in decreased STAT1 phosphorylation and ubiquitin-mediated proteasome-dependent STAT1 degradation, leading to decreased IFN-stimulated gene transcription (By similarity). Interacts with host STAT3; this interaction constitutively activates STAT3 (By similarity). Interacts with host LTBR receptor (By similarity). Interacts with host TNFRSF1A receptor and possibly induces apoptosis (By similarity). Interacts with host HNRPK (By similarity). Interacts with host YWHAE (By similarity). Interacts with host UBE3A/E6AP (By similarity). Interacts with host DDX3X (By similarity). Interacts with host APOA2 (By similarity). Interacts with host RXRA protein (By similarity). Interacts with host SP110 isoform 3/Sp110b; this interaction sequesters the transcriptional corepressor SP110 away from the nucleus (By similarity). Interacts with host CREB3 nuclear transcription protein; this interaction triggers cell transformation (By similarity). Interacts with host ACY3 (By similarity). Interacts with host C1QR1 (By similarity). Interacts with host RBM24; this interaction, which enhances the interaction of the mature core protein with 5'-UTR, may inhibit viral translation and favor replication (PubMed:29380205). Interacts (via N-terminus) with host EIF2AK2/PKR (via N-terminus); this interaction induces the autophosphorylation of EIF2AK2 (By similarity). Part of the viral assembly initiation complex composed of NS2, E1, E2, NS3, NS4A, NS5A and the mature core protein (PubMed:31121874).</text>
</comment>
<comment type="subunit">
    <molecule>Envelope glycoprotein E1</molecule>
    <text evidence="6 42">Forms a heterodimer with envelope glycoprotein E2 (By similarity). Interacts with mature core protein (By similarity). Interacts with protease NS2 (By similarity). The heterodimer E1/E2 interacts with host CLDN1; this interaction plays a role in viral entry into host cell (By similarity). Interacts with host SPSB2 (via C-terminus) (By similarity). Part of the viral assembly initiation complex composed of NS2, E1, E2, NS3, NS4A, NS5A and the mature core protein (PubMed:31121874).</text>
</comment>
<comment type="subunit">
    <molecule>Envelope glycoprotein E2</molecule>
    <text evidence="6 23 27 42">Forms a heterodimer with envelope glycoprotein E1 (By similarity). Interacts with host CD81 and SCARB1 receptors; these interactions play a role in viral entry into host cell (By similarity). Interacts with host EIF2AK2/PKR; this interaction inhibits EIF2AK2 and probably allows the virus to evade the innate immune response (By similarity). Interacts with host CD209/DC-SIGN and CLEC4M/DC-SIGNR (By similarity). Interact with host SPCS1; this interaction is essential for viral particle assembly (PubMed:24009510). Interacts with protease NS2 (PubMed:21347350). The heterodimer E1/E2 interacts with host CLDN1; this interaction plays a role in viral entry into host cell (By similarity). Part of the viral assembly initiation complex composed of NS2, E1, E2, NS3, NS4A, NS5A and the mature core protein (PubMed:31121874). Interacts with host SLC3A2/4F2hc; the interaction may facilitate viral entry into host cell (By similarity).</text>
</comment>
<comment type="subunit">
    <molecule>Viroporin p7</molecule>
    <text evidence="2 6 23">Homohexamer (By similarity). Homoheptamer (By similarity). Interacts with protease NS2 (PubMed:21347350).</text>
</comment>
<comment type="subunit">
    <molecule>Protease NS2</molecule>
    <text evidence="6 23 27 42">Homodimer (By similarity). Interacts with host SPCS1; this interaction is essential for viral particle assembly (PubMed:24009510). Interacts with envelope glycoprotein E1 (By similarity). Interacts with envelope glycoprotein E2 (PubMed:21347350). Interacts with viroporin p7 (PubMed:21347350). Interacts with serine protease/helicase NS3 (By similarity). Part of the replication complex composed of NS2, NS3, NS4A, NS4B, NS5A and the RNA-directed RNA polymerase embedded in an ER-derived membranous web (By similarity). Part of the viral assembly initiation complex composed of NS2, E1, E2, NS3, NS4A, NS5A and the mature core protein (PubMed:31121874). Interacts with host NEURL3; this interaction prevents E1 binding to glycoprotein E2 (By similarity).</text>
</comment>
<comment type="subunit">
    <molecule>Serine protease/helicase NS3</molecule>
    <text evidence="4 6 12 38 42">Interacts with protease NS2 (By similarity). Interacts with non-structural protein 4A; this interaction stabilizes the folding of NS3 serine protease (By similarity). NS3-NS4A interaction is essential for NS3 activation and allows membrane anchorage of the latter (By similarity). NS3/NS4A complex also prevents phosphorylation of host IRF3, thus preventing the establishment of dsRNA induced antiviral state (By similarity). Interacts with host MAVS; this interaction leads to the cleavage and inhibition of host MAVS (By similarity). Interacts with host TICAM1; this interaction leads to the cleavage and inhibition of host TICAM1 (By similarity). Interacts with host TANK-binding kinase/TBK1; this interaction results in the inhibition of the association between TBK1 and IRF3, which leads to the inhibition of IRF3 activation (By similarity). Interacts with host RBM24 (PubMed:29380205). Part of the replication complex composed of NS2, NS3, NS4A, NS4B, NS5A and the RNA-directed RNA polymerase embedded in an ER-derived membranous web (By similarity). Part of the viral assembly initiation complex composed of NS2, E1, E2, NS3, NS4A, NS5A and the mature core protein (PubMed:31121874).</text>
</comment>
<comment type="subunit">
    <molecule>Non-structural protein 4A</molecule>
    <text evidence="3 4 6 42">Interacts with NS3 serine protease; this interaction stabilizes the folding of NS3 serine protease (By similarity). NS3-NS4A interaction is essential for NS3 activation and allows membrane anchorage of the latter (By similarity). Interacts with non-structural protein 5A (via N-terminus) (By similarity). Part of the replication complex composed of NS2, NS3, NS4A, NS4B, NS5A and the RNA-directed RNA polymerase embedded in an ER-derived membranous web (By similarity). Part of the viral assembly initiation complex composed of NS2, E1, E2, NS3, NS4A, NS5A and the mature core protein (PubMed:31121874).</text>
</comment>
<comment type="subunit">
    <molecule>Non-structural protein 4B</molecule>
    <text evidence="6 25">Homomultimer (By similarity). Interacts with non-structural protein NS5A (By similarity). Interacts with host PLA2G4C; this interaction likely initiates the recruitment of replication complexes to lipid droplets (PubMed:23015700). Interacts with host STING; this interaction disrupts the interaction between STING and TBK1 thereby suppressing the interferon signaling (By similarity). Part of the replication complex composed of NS2, NS3, NS4A, NS4B, NS5A and the RNA-directed RNA polymerase embedded in an ER-derived membranous web (By similarity).</text>
</comment>
<comment type="subunit">
    <molecule>Non-structural protein 5A</molecule>
    <text evidence="3 4 5 6 21 24 28 32 33 37 41 42 43">Monomer (By similarity). Homodimer; dimerization is required for RNA-binding (PubMed:29352312). Interacts with the mature core protein (PubMed:18524832). Interacts (via N-terminus) with non-structural protein 4A (By similarity). Interacts with non-structural protein 4B (By similarity). Interacts (via region D2) with RNA-directed RNA polymerase (PubMed:28912275). Part of the viral assembly initiation complex composed of NS2, E1, E2, NS3, NS4A, NS5A and the mature core protein (PubMed:31121874). Part of the replication complex composed of NS2, NS3, NS4A, NS4B, NS5A and the RNA-directed RNA polymerase embedded in an ER-derived membranous web (By similarity). Interacts with host GRB2 (By similarity). Interacts with host BIN1 (By similarity). Interacts with host PIK3R1 (By similarity). Interacts with host SRCAP (By similarity). Interacts with host FKBP8 (By similarity). Interacts (via C-terminus) with host VAPB (via MSP domain) (By similarity). Interacts with host EIF2AK2/PKR; this interaction leads to disruption of EIF2AK2 dimerization by NS5A and probably allows the virus to evade the innate immune response (By similarity). Interacts (via N-terminus) with host PACSIN2 (via N-terminus); this interaction attenuates protein kinase C alpha-mediated phosphorylation of PACSIN2 by disrupting the interaction between PACSIN2 and PRKCA (By similarity). Interacts (via N-terminus) with host SRC kinase (via SH2 domain) (PubMed:30862675). Interacts with most Src-family kinases (By similarity). Interacts with host IFI27 and SKP2; promotes the ubiquitin-mediated proteasomal degradation of NS5A (By similarity). Interacts with host GPS2 (PubMed:24223774). Interacts with host TNFRSF21; this interaction allows the modulation by the virus of JNK, p38 MAPK, STAT3, and Akt signaling pathways in a DR6-dependent manner (By similarity). Interacts (via N-terminus) with host CIDEB (via N-terminus); this interaction seems to regulate the association of HCV particles with APOE (By similarity). Interacts with host CHKA/Choline Kinase-alpha; CHKA bridges host PI4KA and NS5A and potentiates NS5A-stimulated PI4KA activity, which then facilitates the targeting of the ternary complex to the ER for viral replication (PubMed:28566381). Interacts with host SPSB2 (via C-terminus); this interaction targets NS5A for ubiquitination and degradation (By similarity). Interacts with host RAB18; this interaction may promote the association of NS5A and other replicase components with lipid droplets (By similarity). Interacts (via region D2) with host PPIA/CYPA; the interaction stimulates RNA-binding ability of NS5A and is dependent on the peptidyl-prolyl cis-trans isomerase activity of PPIA/CYPA (PubMed:21593166, PubMed:31315928). Interacts with host TRIM14; this interaction induces the degradation of NS5A (By similarity).</text>
</comment>
<comment type="subunit">
    <molecule>RNA-directed RNA polymerase</molecule>
    <text evidence="3 6">Homooligomer (By similarity). Interacts with non-structural protein 5A (By similarity). Interacts with host VAPB (By similarity). Interacts with host PRK2/PKN2 (By similarity). Interacts with host HNRNPA1 and SEPT6; these interactions facilitate the viral replication (By similarity). Part of the replication complex composed of NS2, NS3, NS4A, NS4B, NS5A and the RNA-directed RNA polymerase embedded in an ER-derived membranous web (By similarity).</text>
</comment>
<comment type="interaction">
    <interactant intactId="EBI-6674379">
        <id>Q99IB8</id>
    </interactant>
    <interactant intactId="EBI-6674379">
        <id>Q99IB8</id>
        <label>-</label>
    </interactant>
    <organismsDiffer>false</organismsDiffer>
    <experiments>4</experiments>
</comment>
<comment type="interaction">
    <interactant intactId="EBI-6674379">
        <id>Q99IB8</id>
    </interactant>
    <interactant intactId="EBI-353779">
        <id>O00571</id>
        <label>DDX3X</label>
    </interactant>
    <organismsDiffer>true</organismsDiffer>
    <experiments>9</experiments>
</comment>
<comment type="interaction">
    <interactant intactId="EBI-6858513">
        <id>PRO_0000045592</id>
    </interactant>
    <interactant intactId="EBI-716346">
        <id>O60260</id>
        <label>PRKN</label>
    </interactant>
    <organismsDiffer>true</organismsDiffer>
    <experiments>3</experiments>
</comment>
<comment type="interaction">
    <interactant intactId="EBI-6858513">
        <id>PRO_0000045592</id>
    </interactant>
    <interactant intactId="EBI-2352802">
        <id>Q9BRP8</id>
        <label>PYM1</label>
    </interactant>
    <organismsDiffer>true</organismsDiffer>
    <experiments>4</experiments>
</comment>
<comment type="interaction">
    <interactant intactId="EBI-6858513">
        <id>PRO_0000045592</id>
    </interactant>
    <interactant intactId="EBI-8753518">
        <id>PRO_0000037576</id>
        <dbReference type="UniProtKB" id="P27958"/>
    </interactant>
    <organismsDiffer>true</organismsDiffer>
    <experiments>3</experiments>
</comment>
<comment type="interaction">
    <interactant intactId="EBI-6901441">
        <id>PRO_0000045595</id>
    </interactant>
    <interactant intactId="EBI-6901449">
        <id>PRO_0000045596</id>
        <label>-</label>
        <dbReference type="UniProtKB" id="Q99IB8"/>
    </interactant>
    <organismsDiffer>false</organismsDiffer>
    <experiments>5</experiments>
</comment>
<comment type="interaction">
    <interactant intactId="EBI-6901449">
        <id>PRO_0000045596</id>
    </interactant>
    <interactant intactId="EBI-6928570">
        <id>PRO_0000045601</id>
        <label>-</label>
        <dbReference type="UniProtKB" id="Q99IB8"/>
    </interactant>
    <organismsDiffer>false</organismsDiffer>
    <experiments>2</experiments>
</comment>
<comment type="interaction">
    <interactant intactId="EBI-6901449">
        <id>PRO_0000045596</id>
    </interactant>
    <interactant intactId="EBI-722498">
        <id>P02771</id>
        <label>AFP</label>
    </interactant>
    <organismsDiffer>true</organismsDiffer>
    <experiments>2</experiments>
</comment>
<comment type="interaction">
    <interactant intactId="EBI-6901449">
        <id>PRO_0000045596</id>
    </interactant>
    <interactant intactId="EBI-712921">
        <id>P60033</id>
        <label>CD81</label>
    </interactant>
    <organismsDiffer>true</organismsDiffer>
    <experiments>2</experiments>
</comment>
<comment type="interaction">
    <interactant intactId="EBI-6901449">
        <id>PRO_0000045596</id>
    </interactant>
    <interactant intactId="EBI-8852196">
        <id>Q9Y6A9</id>
        <label>SPCS1</label>
    </interactant>
    <organismsDiffer>true</organismsDiffer>
    <experiments>4</experiments>
</comment>
<comment type="interaction">
    <interactant intactId="EBI-8772829">
        <id>PRO_0000045597</id>
    </interactant>
    <interactant intactId="EBI-6901421">
        <id>PRO_0000045598</id>
        <label>-</label>
        <dbReference type="UniProtKB" id="Q99IB8"/>
    </interactant>
    <organismsDiffer>false</organismsDiffer>
    <experiments>4</experiments>
</comment>
<comment type="interaction">
    <interactant intactId="EBI-6901421">
        <id>PRO_0000045598</id>
    </interactant>
    <interactant intactId="EBI-6901441">
        <id>PRO_0000045595</id>
        <label>-</label>
        <dbReference type="UniProtKB" id="Q99IB8"/>
    </interactant>
    <organismsDiffer>false</organismsDiffer>
    <experiments>3</experiments>
</comment>
<comment type="interaction">
    <interactant intactId="EBI-6901421">
        <id>PRO_0000045598</id>
    </interactant>
    <interactant intactId="EBI-6901449">
        <id>PRO_0000045596</id>
        <label>-</label>
        <dbReference type="UniProtKB" id="Q99IB8"/>
    </interactant>
    <organismsDiffer>false</organismsDiffer>
    <experiments>10</experiments>
</comment>
<comment type="interaction">
    <interactant intactId="EBI-6901421">
        <id>PRO_0000045598</id>
    </interactant>
    <interactant intactId="EBI-6858501">
        <id>PRO_0000045599</id>
        <label>-</label>
        <dbReference type="UniProtKB" id="Q99IB8"/>
    </interactant>
    <organismsDiffer>false</organismsDiffer>
    <experiments>4</experiments>
</comment>
<comment type="interaction">
    <interactant intactId="EBI-6901421">
        <id>PRO_0000045598</id>
    </interactant>
    <interactant intactId="EBI-8852196">
        <id>Q9Y6A9</id>
        <label>SPCS1</label>
    </interactant>
    <organismsDiffer>true</organismsDiffer>
    <experiments>7</experiments>
</comment>
<comment type="interaction">
    <interactant intactId="EBI-6858501">
        <id>PRO_0000045599</id>
    </interactant>
    <interactant intactId="EBI-2462104">
        <id>P55265</id>
        <label>ADAR</label>
    </interactant>
    <organismsDiffer>true</organismsDiffer>
    <experiments>3</experiments>
</comment>
<comment type="interaction">
    <interactant intactId="EBI-6858501">
        <id>PRO_0000045599</id>
    </interactant>
    <interactant intactId="EBI-748974">
        <id>Q96CV9</id>
        <label>OPTN</label>
    </interactant>
    <organismsDiffer>true</organismsDiffer>
    <experiments>3</experiments>
</comment>
<comment type="interaction">
    <interactant intactId="EBI-6858501">
        <id>PRO_0000045599</id>
    </interactant>
    <interactant intactId="EBI-358037">
        <id>P05455</id>
        <label>SSB</label>
    </interactant>
    <organismsDiffer>true</organismsDiffer>
    <experiments>2</experiments>
</comment>
<comment type="interaction">
    <interactant intactId="EBI-6858501">
        <id>PRO_0000045599</id>
    </interactant>
    <interactant intactId="EBI-1027557">
        <id>P36897</id>
        <label>TGFBR1</label>
    </interactant>
    <organismsDiffer>true</organismsDiffer>
    <experiments>5</experiments>
</comment>
<comment type="interaction">
    <interactant intactId="EBI-9096996">
        <id>PRO_0000045600</id>
    </interactant>
    <interactant intactId="EBI-1059156">
        <id>Q9P0L0</id>
        <label>VAPA</label>
    </interactant>
    <organismsDiffer>true</organismsDiffer>
    <experiments>3</experiments>
</comment>
<comment type="interaction">
    <interactant intactId="EBI-9096996">
        <id>PRO_0000045600</id>
    </interactant>
    <interactant intactId="EBI-1188298">
        <id>O95292</id>
        <label>VAPB</label>
    </interactant>
    <organismsDiffer>true</organismsDiffer>
    <experiments>2</experiments>
</comment>
<comment type="interaction">
    <interactant intactId="EBI-6928570">
        <id>PRO_0000045601</id>
    </interactant>
    <interactant intactId="EBI-1058710">
        <id>O43169</id>
        <label>CYB5B</label>
    </interactant>
    <organismsDiffer>true</organismsDiffer>
    <experiments>5</experiments>
</comment>
<comment type="interaction">
    <interactant intactId="EBI-6928570">
        <id>PRO_0000045601</id>
    </interactant>
    <interactant intactId="EBI-2800345">
        <id>Q86WV6</id>
        <label>STING1</label>
    </interactant>
    <organismsDiffer>true</organismsDiffer>
    <experiments>5</experiments>
</comment>
<comment type="interaction">
    <interactant intactId="EBI-6927873">
        <id>PRO_0000045602</id>
    </interactant>
    <interactant intactId="EBI-6927928">
        <id>PRO_0000045603</id>
        <label>-</label>
        <dbReference type="UniProtKB" id="Q99IB8"/>
    </interactant>
    <organismsDiffer>false</organismsDiffer>
    <experiments>3</experiments>
</comment>
<comment type="interaction">
    <interactant intactId="EBI-6927873">
        <id>PRO_0000045602</id>
    </interactant>
    <interactant intactId="EBI-352622">
        <id>P07355</id>
        <label>ANXA2</label>
    </interactant>
    <organismsDiffer>true</organismsDiffer>
    <experiments>5</experiments>
</comment>
<comment type="interaction">
    <interactant intactId="EBI-6927873">
        <id>PRO_0000045602</id>
    </interactant>
    <interactant intactId="EBI-3906527">
        <id>O75907</id>
        <label>DGAT1</label>
    </interactant>
    <organismsDiffer>true</organismsDiffer>
    <experiments>2</experiments>
</comment>
<comment type="interaction">
    <interactant intactId="EBI-6927873">
        <id>PRO_0000045602</id>
    </interactant>
    <interactant intactId="EBI-359013">
        <id>Q9P035</id>
        <label>HACD3</label>
    </interactant>
    <organismsDiffer>true</organismsDiffer>
    <experiments>2</experiments>
</comment>
<comment type="interaction">
    <interactant intactId="EBI-6927873">
        <id>PRO_0000045602</id>
    </interactant>
    <interactant intactId="EBI-49961">
        <id>Q16584</id>
        <label>MAP3K11</label>
    </interactant>
    <organismsDiffer>true</organismsDiffer>
    <experiments>5</experiments>
</comment>
<comment type="interaction">
    <interactant intactId="EBI-6927873">
        <id>PRO_0000045602</id>
    </interactant>
    <interactant intactId="EBI-723050">
        <id>P42356</id>
        <label>PI4KA</label>
    </interactant>
    <organismsDiffer>true</organismsDiffer>
    <experiments>5</experiments>
</comment>
<comment type="interaction">
    <interactant intactId="EBI-6927873">
        <id>PRO_0000045602</id>
    </interactant>
    <interactant intactId="EBI-476768">
        <id>P53350</id>
        <label>PLK1</label>
    </interactant>
    <organismsDiffer>true</organismsDiffer>
    <experiments>4</experiments>
</comment>
<comment type="interaction">
    <interactant intactId="EBI-6927873">
        <id>PRO_0000045602</id>
    </interactant>
    <interactant intactId="EBI-437708">
        <id>P62937</id>
        <label>PPIA</label>
    </interactant>
    <organismsDiffer>true</organismsDiffer>
    <experiments>2</experiments>
</comment>
<comment type="interaction">
    <interactant intactId="EBI-6927873">
        <id>PRO_0000045602</id>
    </interactant>
    <interactant intactId="EBI-722247">
        <id>Q9NP72</id>
        <label>RAB18</label>
    </interactant>
    <organismsDiffer>true</organismsDiffer>
    <experiments>5</experiments>
</comment>
<comment type="interaction">
    <interactant intactId="EBI-6927873">
        <id>PRO_0000045602</id>
    </interactant>
    <interactant intactId="EBI-1059156">
        <id>Q9P0L0</id>
        <label>VAPA</label>
    </interactant>
    <organismsDiffer>true</organismsDiffer>
    <experiments>2</experiments>
</comment>
<comment type="interaction">
    <interactant intactId="EBI-6927928">
        <id>PRO_0000045603</id>
    </interactant>
    <interactant intactId="EBI-356658">
        <id>P49327</id>
        <label>FASN</label>
    </interactant>
    <organismsDiffer>true</organismsDiffer>
    <experiments>6</experiments>
</comment>
<comment type="interaction">
    <interactant intactId="EBI-6927928">
        <id>PRO_0000045603</id>
    </interactant>
    <interactant intactId="EBI-1220319">
        <id>P02751</id>
        <label>FN1</label>
    </interactant>
    <organismsDiffer>true</organismsDiffer>
    <experiments>3</experiments>
</comment>
<comment type="interaction">
    <interactant intactId="EBI-6927928">
        <id>PRO_0000045603</id>
    </interactant>
    <interactant intactId="EBI-739467">
        <id>Q9H8Y8</id>
        <label>GORASP2</label>
    </interactant>
    <organismsDiffer>true</organismsDiffer>
    <experiments>3</experiments>
</comment>
<comment type="interaction">
    <interactant intactId="EBI-6927928">
        <id>PRO_0000045603</id>
    </interactant>
    <interactant intactId="EBI-351896">
        <id>P11142</id>
        <label>HSPA8</label>
    </interactant>
    <organismsDiffer>true</organismsDiffer>
    <experiments>3</experiments>
</comment>
<comment type="interaction">
    <interactant intactId="EBI-6927928">
        <id>PRO_0000045603</id>
    </interactant>
    <interactant intactId="EBI-1043774">
        <id>O75592</id>
        <label>MYCBP2</label>
    </interactant>
    <organismsDiffer>true</organismsDiffer>
    <experiments>3</experiments>
</comment>
<comment type="interaction">
    <interactant intactId="EBI-6927928">
        <id>PRO_0000045603</id>
    </interactant>
    <interactant intactId="EBI-2622179">
        <id>Q02818</id>
        <label>NUCB1</label>
    </interactant>
    <organismsDiffer>true</organismsDiffer>
    <experiments>3</experiments>
</comment>
<comment type="interaction">
    <interactant intactId="EBI-6927928">
        <id>PRO_0000045603</id>
    </interactant>
    <interactant intactId="EBI-958266">
        <id>Q13129</id>
        <label>RLF</label>
    </interactant>
    <organismsDiffer>true</organismsDiffer>
    <experiments>2</experiments>
</comment>
<comment type="interaction">
    <interactant intactId="EBI-6927928">
        <id>PRO_0000045603</id>
    </interactant>
    <interactant intactId="EBI-80690">
        <id>Q14683</id>
        <label>SMC1A</label>
    </interactant>
    <organismsDiffer>true</organismsDiffer>
    <experiments>3</experiments>
</comment>
<comment type="interaction">
    <interactant intactId="EBI-6927928">
        <id>PRO_0000045603</id>
    </interactant>
    <interactant intactId="EBI-358037">
        <id>P05455</id>
        <label>SSB</label>
    </interactant>
    <organismsDiffer>true</organismsDiffer>
    <experiments>2</experiments>
</comment>
<comment type="interaction">
    <interactant intactId="EBI-6927928">
        <id>PRO_0000045603</id>
    </interactant>
    <interactant intactId="EBI-714455">
        <id>Q9Y2W2</id>
        <label>WBP11</label>
    </interactant>
    <organismsDiffer>true</organismsDiffer>
    <experiments>3</experiments>
</comment>
<comment type="subcellular location">
    <molecule>Core protein precursor</molecule>
    <subcellularLocation>
        <location evidence="5">Host endoplasmic reticulum membrane</location>
        <topology evidence="13">Single-pass membrane protein</topology>
    </subcellularLocation>
    <subcellularLocation>
        <location evidence="5">Host mitochondrion membrane</location>
        <topology evidence="13">Single-pass type I membrane protein</topology>
    </subcellularLocation>
    <text>The C-terminal transmembrane domain of the core protein precursor contains an ER signal leading the nascent polyprotein to the ER membrane.</text>
</comment>
<comment type="subcellular location">
    <molecule>Mature core protein</molecule>
    <subcellularLocation>
        <location evidence="26">Virion</location>
    </subcellularLocation>
    <subcellularLocation>
        <location evidence="26">Host cytoplasm</location>
    </subcellularLocation>
    <subcellularLocation>
        <location evidence="3">Host nucleus</location>
    </subcellularLocation>
    <subcellularLocation>
        <location evidence="37">Host lipid droplet</location>
    </subcellularLocation>
    <text evidence="6">Only a minor proportion of core protein is present in the nucleus (By similarity). Probably present on the surface of lipid droplets (By similarity).</text>
</comment>
<comment type="subcellular location">
    <molecule>Envelope glycoprotein E1</molecule>
    <subcellularLocation>
        <location evidence="46">Virion membrane</location>
        <topology evidence="46">Single-pass type I membrane protein</topology>
    </subcellularLocation>
    <subcellularLocation>
        <location>Host endoplasmic reticulum membrane</location>
        <topology evidence="6">Single-pass type I membrane protein</topology>
    </subcellularLocation>
    <text evidence="6">The C-terminal transmembrane domain acts as a signal sequence and forms a hairpin structure before cleavage by host signal peptidase (By similarity). After cleavage, the membrane sequence is retained at the C-terminus of the protein, serving as ER membrane anchor (By similarity). A reorientation of the second hydrophobic stretch occurs after cleavage producing a single reoriented transmembrane domain (By similarity). These events explain the final topology of the protein (By similarity).</text>
</comment>
<comment type="subcellular location">
    <molecule>Envelope glycoprotein E2</molecule>
    <subcellularLocation>
        <location evidence="46">Virion membrane</location>
        <topology evidence="46">Single-pass type I membrane protein</topology>
    </subcellularLocation>
    <subcellularLocation>
        <location>Host endoplasmic reticulum membrane</location>
        <topology evidence="6">Single-pass type I membrane protein</topology>
    </subcellularLocation>
    <subcellularLocation>
        <location evidence="12">Host lipid droplet</location>
    </subcellularLocation>
    <text evidence="6">The C-terminal transmembrane domain acts as a signal sequence and forms a hairpin structure before cleavage by host signal peptidase (By similarity). After cleavage, the membrane sequence is retained at the C-terminus of the protein, serving as ER membrane anchor (By similarity). A reorientation of the second hydrophobic stretch occurs after cleavage producing a single reoriented transmembrane domain (By similarity). These events explain the final topology of the protein (By similarity).</text>
</comment>
<comment type="subcellular location">
    <molecule>Viroporin p7</molecule>
    <subcellularLocation>
        <location evidence="19">Host endoplasmic reticulum membrane</location>
        <topology evidence="19">Multi-pass membrane protein</topology>
    </subcellularLocation>
    <subcellularLocation>
        <location evidence="6">Host mitochondrion</location>
    </subcellularLocation>
    <subcellularLocation>
        <location evidence="19">Host cell membrane</location>
    </subcellularLocation>
    <text evidence="6">The C-terminus of p7 membrane domain acts as a signal sequence (By similarity). After cleavage by host signal peptidase, the membrane sequence is retained at the C-terminus of the protein, serving as ER membrane anchor (By similarity). ER retention of p7 is leaky and a small fraction reaches the plasma membrane (By similarity).</text>
</comment>
<comment type="subcellular location">
    <molecule>Protease NS2</molecule>
    <subcellularLocation>
        <location evidence="5">Host endoplasmic reticulum membrane</location>
        <topology evidence="5">Multi-pass membrane protein</topology>
    </subcellularLocation>
    <subcellularLocation>
        <location evidence="23">Host lipid droplet</location>
    </subcellularLocation>
    <text evidence="47">Probably present on the surface of lipid droplets.</text>
</comment>
<comment type="subcellular location">
    <molecule>Serine protease/helicase NS3</molecule>
    <subcellularLocation>
        <location evidence="46">Host endoplasmic reticulum membrane</location>
        <topology evidence="46">Peripheral membrane protein</topology>
    </subcellularLocation>
    <text evidence="46">NS3 is associated to the ER membrane through its binding to NS4A.</text>
</comment>
<comment type="subcellular location">
    <molecule>Non-structural protein 4A</molecule>
    <subcellularLocation>
        <location evidence="46">Host endoplasmic reticulum membrane</location>
        <topology evidence="46">Single-pass type I membrane protein</topology>
    </subcellularLocation>
    <text evidence="46">Host membrane insertion occurs after processing by the NS3 protease.</text>
</comment>
<comment type="subcellular location">
    <molecule>Non-structural protein 4B</molecule>
    <subcellularLocation>
        <location evidence="6">Host endoplasmic reticulum membrane</location>
        <topology evidence="6">Multi-pass membrane protein</topology>
    </subcellularLocation>
    <text evidence="6">A reorientation of the N-terminus into the ER lumen occurs post-translationally.</text>
</comment>
<comment type="subcellular location">
    <molecule>Non-structural protein 5A</molecule>
    <subcellularLocation>
        <location evidence="6">Host endoplasmic reticulum membrane</location>
        <topology evidence="6">Peripheral membrane protein</topology>
    </subcellularLocation>
    <subcellularLocation>
        <location evidence="6">Host cytoplasm</location>
        <location evidence="6">Host perinuclear region</location>
    </subcellularLocation>
    <subcellularLocation>
        <location evidence="6">Host mitochondrion</location>
    </subcellularLocation>
    <subcellularLocation>
        <location evidence="44">Host cytoplasm</location>
    </subcellularLocation>
    <subcellularLocation>
        <location evidence="3">Host nucleus</location>
    </subcellularLocation>
    <subcellularLocation>
        <location evidence="37">Host lipid droplet</location>
    </subcellularLocation>
    <text evidence="3 6">Host membrane insertion occurs after processing by the NS3 protease (By similarity). Localizes at the surface of lipid droplets (By similarity).</text>
</comment>
<comment type="subcellular location">
    <molecule>RNA-directed RNA polymerase</molecule>
    <subcellularLocation>
        <location evidence="6">Host cytoplasm</location>
    </subcellularLocation>
    <subcellularLocation>
        <location>Host endoplasmic reticulum membrane</location>
        <topology evidence="6">Single-pass type IV membrane protein</topology>
    </subcellularLocation>
    <text evidence="6">Host membrane insertion occurs after processing by the NS3 protease.</text>
</comment>
<comment type="domain">
    <molecule>Mature core protein</molecule>
    <text evidence="6">The disordered N-terminus allows the interaction with several host proteins (By similarity). This disordered region also seems to play an important role in mediating RNA chaperoning (By similarity).</text>
</comment>
<comment type="domain">
    <molecule>Envelope glycoprotein E1</molecule>
    <text evidence="6">The transmembrane regions of envelope E1 and E2 glycoproteins are involved in heterodimer formation, ER localization, and assembly of these proteins.</text>
</comment>
<comment type="domain">
    <molecule>Envelope glycoprotein E2</molecule>
    <text evidence="4 6">The transmembrane regions of envelope E1 and E2 glycoproteins are involved in heterodimer formation, ER localization, and assembly of these proteins (By similarity). Envelope E2 glycoprotein contain two highly variable regions called hypervariable region 1 and 2 (HVR1 and HVR2) (By similarity). E2 also contain two segments involved in CD81-binding (By similarity). HVR1 is implicated in the SCARB1-mediated cell entry and probably acts as a regulator of the association of particles with lipids (By similarity).</text>
</comment>
<comment type="domain">
    <molecule>Protease NS2</molecule>
    <text evidence="4">The N-terminus of NS3 is required for the catalytic activity of protease NS2 (By similarity). The minimal catalytic region includes the C-terminus of NS2 and the N-terminus NS3 protease domain (active region NS2-3) (By similarity).</text>
</comment>
<comment type="domain">
    <molecule>Serine protease/helicase NS3</molecule>
    <text evidence="3 4 6">The N-terminal one-third contains the protease activity (By similarity). This region contains a zinc atom that does not belong to the active site, but may play a structural rather than a catalytic role (By similarity). This region is essential for the activity of protease NS2, maybe by contributing to the folding of the latter (By similarity). The NTPase/helicase activity is located in the twothirds C-terminus of NS3, this domain contains the NTPase and RNA-binding regions (By similarity).</text>
</comment>
<comment type="domain">
    <molecule>Non-structural protein 4B</molecule>
    <text evidence="35">Contains a glycine zipper region that critically contributes to the biogenesis of functional ER-derived replication organelles.</text>
</comment>
<comment type="domain">
    <molecule>Non-structural protein 5A</molecule>
    <text evidence="6">The N-terminus acts as a membrane anchor (By similarity). The C-terminus contains a nuclear localization signal (By similarity).</text>
</comment>
<comment type="domain">
    <molecule>Non-structural protein 5A</molecule>
    <text evidence="3 6">Contains a variable region called interferon sensitivity determining region (ISDR) and a variable region called variable region 3 (V3) (By similarity). ISDR and V3 may be involved in sensitivity and/or resistance to IFN-alpha therapy (By similarity).</text>
</comment>
<comment type="domain">
    <molecule>Non-structural protein 5A</molecule>
    <text evidence="6">The SH3-binding domain is involved in the interaction with host BIN1, GRB2 and Src-family kinases.</text>
</comment>
<comment type="domain">
    <molecule>Non-structural protein 5A</molecule>
    <text evidence="6">The structured region D1 is involved in RNA-binding.</text>
</comment>
<comment type="domain">
    <molecule>Non-structural protein 5A</molecule>
    <text evidence="6 24 33 43">The first disordered region named D2 interacts with several viral and host proteins (PubMed:21593166, PubMed:28912275, PubMed:31315928). The largely disordered region D3 mediates the interaction with several host proteins and is involved in virion assembly (By similarity).</text>
</comment>
<comment type="PTM">
    <molecule>Genome polyprotein</molecule>
    <text evidence="4 5 6 26">Specific enzymatic cleavages in vivo yield mature proteins (By similarity). The structural proteins, core, E1, E2 and p7 are produced by proteolytic processing by host signal peptidases (By similarity). The core protein is synthesized as a 23 kDa precursor which is retained in the ER membrane through the hydrophobic signal peptide (By similarity). Cleavage by the signal peptidase releases the 21 kDa mature core protein (By similarity). The cleavage of the core protein precursor occurs between aminoacids 176 and 188 but the exact cleavage site is not known (By similarity). Some degraded forms of the core protein appear as well during the course of infection (PubMed:23543610). The other proteins (p7, NS2, NS3, NS4A, NS4B, NS5A and NS5B) are cleaved by the viral proteases (By similarity). Autoprocessing between NS2 and NS3 is mediated by the NS2 cysteine protease catalytic domain and regulated by the NS3 N-terminal domain (By similarity).</text>
</comment>
<comment type="PTM">
    <molecule>Mature core protein</molecule>
    <text evidence="8 48">Phosphorylated by host PKC and PKA.</text>
</comment>
<comment type="PTM">
    <molecule>Mature core protein</molecule>
    <text evidence="9">Ubiquitinated; mediated by UBE3A and leading to core protein subsequent proteasomal degradation.</text>
</comment>
<comment type="PTM">
    <molecule>Envelope glycoprotein E1</molecule>
    <text evidence="6">Highly N-glycosylated.</text>
</comment>
<comment type="PTM">
    <molecule>Envelope glycoprotein E2</molecule>
    <text evidence="6">Highly N-glycosylated.</text>
</comment>
<comment type="PTM">
    <molecule>Protease NS2</molecule>
    <text evidence="6">Palmitoylation is required for NS2/3 autoprocessing and E2 recruitment to membranes.</text>
</comment>
<comment type="PTM">
    <molecule>Non-structural protein 4B</molecule>
    <text evidence="6">Palmitoylated. This modification may play a role in its polymerization or in protein-protein interactions.</text>
</comment>
<comment type="PTM">
    <molecule>Non-structural protein 5A</molecule>
    <text evidence="3">Cleaved by host caspases which arec probably activated by the viral infection.</text>
</comment>
<comment type="PTM">
    <molecule>Non-structural protein 5A</molecule>
    <text evidence="6">Ubiquitinated (By similarity). Ubiquitination, most probably at Lys-2350, mediated by host IFI27 and SKP2 leads to proteasomal degradation, restricting viral infection (By similarity).</text>
</comment>
<comment type="PTM">
    <molecule>Non-structural protein 5A</molecule>
    <text evidence="3 4 30 31 39 44">Phosphorylated on serines in a basal form termed p56 (PubMed:26874015, PubMed:28446668). p58 is a hyperphosphorylated form of p56 (PubMed:26874015, PubMed:28446668, PubMed:30089697, PubMed:31511391). p56 and p58 coexist in the cell in roughly equivalent amounts (By similarity). Hyperphosphorylation is dependent on the presence of NS4A (By similarity). Host CSNK1A1/CKI-alpha, PI4KA or RPS6KB1 kinases may be responsible for NS5A phosphorylation (By similarity). Phosphorylated NS5A is involved in viral replication (PubMed:26874015).</text>
</comment>
<comment type="PTM">
    <molecule>Non-structural protein 5A</molecule>
    <text evidence="41">Tyrosine phosphorylation is essential for the interaction with host SRC.</text>
</comment>
<comment type="PTM">
    <molecule>RNA-directed RNA polymerase</molecule>
    <text evidence="6">The N-terminus is phosphorylated by host PRK2/PKN2.</text>
</comment>
<comment type="miscellaneous">
    <text evidence="46">Viral particle assembly takes place at the surface of ER-derived membranes in close proximity to lipid droplets. NS2 associates with E1/E2 glycoproteins, NS3 and NS5A, which interacts with the viral RNA and core protein to promote genome encapsidation. The nucleocapsid buds at the ER membrane where E1/E2 glycoproteins are anchored and afterward associate with nascent lipid droplet to acquire APOE and APOC. Secretion of viral particles is probably regulated by viroporin p7.</text>
</comment>
<comment type="miscellaneous">
    <molecule>Non-structural protein 5A</molecule>
    <text evidence="46">Cell culture adaptation of the virus leads to mutations in NS5A, reducing its inhibitory effect on replication.</text>
</comment>
<comment type="miscellaneous">
    <molecule>Mature core protein</molecule>
    <text evidence="3">Exerts viral interference on hepatitis B virus when HCV and HBV coinfect the same cell, by suppressing HBV gene expression, RNA encapsidation and budding.</text>
</comment>
<comment type="similarity">
    <text evidence="46">Belongs to the hepacivirus polyprotein family.</text>
</comment>
<comment type="caution">
    <text evidence="46">The core gene probably also codes for alternative reading frame proteins (ARFPs). Many functions depicted for the core protein might belong to the ARFPs.</text>
</comment>
<reference key="1">
    <citation type="journal article" date="2001" name="J. Med. Virol.">
        <title>Sequence analysis of hepatitis C virus isolated from a fulminant hepatitis patient.</title>
        <authorList>
            <person name="Kato T."/>
            <person name="Furusaka A."/>
            <person name="Miyamoto M."/>
            <person name="Date T."/>
            <person name="Yasui K."/>
            <person name="Hiramoto J."/>
            <person name="Nagayama K."/>
            <person name="Tanaka T."/>
            <person name="Wakita T."/>
        </authorList>
    </citation>
    <scope>NUCLEOTIDE SEQUENCE [GENOMIC RNA]</scope>
</reference>
<reference key="2">
    <citation type="journal article" date="2007" name="J. Gen. Virol.">
        <title>Hepatitis C virus p7 protein is localized in the endoplasmic reticulum when it is encoded by a replication-competent genome.</title>
        <authorList>
            <person name="Haqshenas G."/>
            <person name="Mackenzie J.M."/>
            <person name="Dong X."/>
            <person name="Gowans E.J."/>
        </authorList>
    </citation>
    <scope>SUBCELLULAR LOCATION (VIROPORIN P7)</scope>
</reference>
<reference key="3">
    <citation type="journal article" date="2000" name="J. Viral Hepat.">
        <title>Properties of the hepatitis C virus core protein: a structural protein that modulates cellular processes.</title>
        <authorList>
            <person name="McLauchlan J."/>
        </authorList>
    </citation>
    <scope>REVIEW</scope>
</reference>
<reference key="4">
    <citation type="journal article" date="2004" name="Hepatology">
        <title>Structural biology of hepatitis C virus.</title>
        <authorList>
            <person name="Penin F."/>
            <person name="Dubuisson J."/>
            <person name="Rey F.A."/>
            <person name="Moradpour D."/>
            <person name="Pawlotsky J.-M."/>
        </authorList>
    </citation>
    <scope>REVIEW</scope>
</reference>
<reference key="5">
    <citation type="journal article" date="2008" name="J. Virol.">
        <title>Interaction of hepatitis C virus nonstructural protein 5A with core protein is critical for the production of infectious virus particles.</title>
        <authorList>
            <person name="Masaki T."/>
            <person name="Suzuki R."/>
            <person name="Murakami K."/>
            <person name="Aizaki H."/>
            <person name="Ishii K."/>
            <person name="Murayama A."/>
            <person name="Date T."/>
            <person name="Matsuura Y."/>
            <person name="Miyamura T."/>
            <person name="Wakita T."/>
            <person name="Suzuki T."/>
        </authorList>
    </citation>
    <scope>INTERACTION WITH NON-STRUCTURAL PROTEIN 5A (MATURE CORE PROTEIN)</scope>
    <scope>INTERACTION WITH MATURE CORE PROTEIN (NON-STRUCTURAL PROTEIN 5A)</scope>
    <scope>FUNCTION (NON-STRUCTURAL PROTEIN 5A)</scope>
    <scope>FUNCTION (MATURE CORE PROTEIN)</scope>
    <scope>MUTAGENESIS OF 2428-SER--SER-2433</scope>
</reference>
<reference key="6">
    <citation type="journal article" date="2007" name="Nature">
        <title>Claudin-1 is a hepatitis C virus co-receptor required for a late step in entry.</title>
        <authorList>
            <person name="Evans M.J."/>
            <person name="von Hahn T."/>
            <person name="Tscherne D.M."/>
            <person name="Syder A.J."/>
            <person name="Panis M."/>
            <person name="Wolk B."/>
            <person name="Hatziioannou T."/>
            <person name="McKeating J.A."/>
            <person name="Bieniasz P.D."/>
            <person name="Rice C.M."/>
        </authorList>
    </citation>
    <scope>FUNCTION (ENVELOPE GLYCOPROTEIN E1)</scope>
    <scope>FUNCTION (ENVELOPE GLYCOPROTEIN E2)</scope>
</reference>
<reference key="7">
    <citation type="journal article" date="2010" name="J. Virol.">
        <title>All three domains of the hepatitis C virus nonstructural NS5A protein contribute to RNA binding.</title>
        <authorList>
            <person name="Foster T.L."/>
            <person name="Belyaeva T."/>
            <person name="Stonehouse N.J."/>
            <person name="Pearson A.R."/>
            <person name="Harris M."/>
        </authorList>
    </citation>
    <scope>FUNCTION (NON-STRUCTURAL PROTEIN 5A)</scope>
    <scope>RNA-BINDING (NON-STRUCTURAL PROTEIN 5A)</scope>
</reference>
<reference key="8">
    <citation type="journal article" date="2011" name="J. Virol.">
        <title>Cyclophilin A interacts with domain II of hepatitis C virus NS5A and stimulates RNA binding in an isomerase-dependent manner.</title>
        <authorList>
            <person name="Foster T.L."/>
            <person name="Gallay P."/>
            <person name="Stonehouse N.J."/>
            <person name="Harris M."/>
        </authorList>
    </citation>
    <scope>INTERACTION WITH HUMAN PPIA (NON-STRUCTURAL PROTEIN 5A)</scope>
    <scope>MUTAGENESIS OF ASP-2292 AND TYR-2293</scope>
    <scope>DOMAIN (NON-STRUCTURAL PROTEIN 5A)</scope>
</reference>
<reference key="9">
    <citation type="journal article" date="2011" name="PLoS Pathog.">
        <title>NS2 protein of hepatitis C virus interacts with structural and non-structural proteins towards virus assembly.</title>
        <authorList>
            <person name="Popescu C.I."/>
            <person name="Callens N."/>
            <person name="Trinel D."/>
            <person name="Roingeard P."/>
            <person name="Moradpour D."/>
            <person name="Descamps V."/>
            <person name="Duverlie G."/>
            <person name="Penin F."/>
            <person name="Heliot L."/>
            <person name="Rouille Y."/>
            <person name="Dubuisson J."/>
        </authorList>
    </citation>
    <scope>FUNCTION (PROTEASE NS2)</scope>
    <scope>INTERACTION WITH VIROPORIN P7 (PROTEASE NS2)</scope>
    <scope>INTERACTION WITH PROTEASE NS2 (VIROPORIN P7)</scope>
    <scope>INTERACTION WITH ENVELOPE GLYCOPROTEIN E2 (PROTEASE NS2)</scope>
    <scope>INTERACTION WITH PROTEASE NS2 (ENVELOPE GLYCOPROTEIN E2)</scope>
    <scope>SUBCELLULAR LOCATION (PROTEASE NS2)</scope>
</reference>
<reference key="10">
    <citation type="journal article" date="2012" name="J. Virol.">
        <title>Cytosolic phospholipase A2 gamma is involved in hepatitis C virus replication and assembly.</title>
        <authorList>
            <person name="Xu S."/>
            <person name="Pei R."/>
            <person name="Guo M."/>
            <person name="Han Q."/>
            <person name="Lai J."/>
            <person name="Wang Y."/>
            <person name="Wu C."/>
            <person name="Zhou Y."/>
            <person name="Lu M."/>
            <person name="Chen X."/>
        </authorList>
    </citation>
    <scope>INTERACTION WITH HOST PLA2G4C (NON-STRUCTURAL PROTEIN 4B)</scope>
    <scope>SUBCELLULAR LOCATION (NON-STRUCTURAL PROTEIN 4B)</scope>
</reference>
<reference key="11">
    <citation type="journal article" date="2013" name="PLoS ONE">
        <title>GPS2 is required for the association of NS5A with VAP-A and hepatitis C virus replication.</title>
        <authorList>
            <person name="Xu G."/>
            <person name="Xin X."/>
            <person name="Zheng C."/>
        </authorList>
    </citation>
    <scope>INTERACTION WITH HOST GPS2 (NON-STRUCTURAL PROTEIN 5A)</scope>
</reference>
<reference key="12">
    <citation type="journal article" date="2013" name="PLoS Pathog.">
        <title>Signal peptidase complex subunit 1 participates in the assembly of hepatitis C virus through an interaction with E2 and NS2.</title>
        <authorList>
            <person name="Suzuki R."/>
            <person name="Matsuda M."/>
            <person name="Watashi K."/>
            <person name="Aizaki H."/>
            <person name="Matsuura Y."/>
            <person name="Wakita T."/>
            <person name="Suzuki T."/>
        </authorList>
    </citation>
    <scope>INTERACTION WITH HOST SPCS1 (ENVELOPE GLYCOPROTEIN E2)</scope>
    <scope>INTERACTION WITH HOST SPCS1 (PROTEASE NS2)</scope>
</reference>
<reference key="13">
    <citation type="journal article" date="2013" name="Virol. Sin.">
        <title>The identification of three sizes of core proteins during the establishment of persistent hepatitis C virus infection in vitro.</title>
        <authorList>
            <person name="Liao Q."/>
            <person name="Tian J."/>
            <person name="Wu Y."/>
            <person name="Chen X."/>
        </authorList>
    </citation>
    <scope>PROTEOLYTIC CLEAVAGE (GENOME POLYPROTEIN)</scope>
    <scope>SUBCELLULAR LOCATION (MATURE CORE PROTEIN)</scope>
</reference>
<reference key="14">
    <citation type="journal article" date="2014" name="PLoS ONE">
        <title>Functional characterization of nuclear localization and export signals in hepatitis C virus proteins and their role in the membranous web.</title>
        <authorList>
            <person name="Levin A."/>
            <person name="Neufeldt C.J."/>
            <person name="Pang D."/>
            <person name="Wilson K."/>
            <person name="Loewen-Dobler D."/>
            <person name="Joyce M.A."/>
            <person name="Wozniak R.W."/>
            <person name="Tyrrell D.L."/>
        </authorList>
    </citation>
    <scope>SUBCELLULAR LOCATION (MATURE CORE PROTEIN)</scope>
    <scope>NUCLEAR LOCALIZATION SIGNAL (MATURE CORE PROTEIN)</scope>
</reference>
<reference key="15">
    <citation type="journal article" date="2016" name="Virology">
        <title>Phosphorylation of NS5A Serine-235 is essential to hepatitis C virus RNA replication and normal replication compartment formation.</title>
        <authorList>
            <person name="Eyre N.S."/>
            <person name="Hampton-Smith R.J."/>
            <person name="Aloia A.L."/>
            <person name="Eddes J.S."/>
            <person name="Simpson K.J."/>
            <person name="Hoffmann P."/>
            <person name="Beard M.R."/>
        </authorList>
    </citation>
    <scope>PHOSPHORYLATION AT SER-2198; SER-2211 AND THR-2324</scope>
    <scope>MUTAGENESIS OF SER-2211</scope>
</reference>
<reference key="16">
    <citation type="journal article" date="2017" name="J. Virol.">
        <title>Serine 235 Is the Primary NS5A Hyperphosphorylation Site Responsible for Hepatitis C Virus Replication.</title>
        <authorList>
            <person name="Hsu S.C."/>
            <person name="Lo C.W."/>
            <person name="Pan T.C."/>
            <person name="Lee K.Y."/>
            <person name="Yu M.J."/>
        </authorList>
    </citation>
    <scope>PHOSPHORYLATION AT SER-2198; SER-2208 AND SER-2211</scope>
    <scope>MUTAGENESIS OF SER-2208 AND SER-2211</scope>
</reference>
<reference key="17">
    <citation type="journal article" date="2017" name="PLoS Pathog.">
        <title>The amino-terminus of the hepatitis C virus (HCV) p7 viroporin and its cleavage from glycoprotein E2-p7 precursor determine specific infectivity and secretion levels of HCV particle types.</title>
        <authorList>
            <person name="Denolly S."/>
            <person name="Mialon C."/>
            <person name="Bourlet T."/>
            <person name="Amirache F."/>
            <person name="Penin F."/>
            <person name="Lindenbach B."/>
            <person name="Boson B."/>
            <person name="Cosset F.L."/>
        </authorList>
    </citation>
    <scope>FUNCTION (VIROPORIN P7)</scope>
    <scope>TOPOLOGY (VIROPORIN P7)</scope>
</reference>
<reference key="18">
    <citation type="journal article" date="2017" name="J. Virol.">
        <title>Hepatitis C Virus Subverts Human Choline Kinase-alpha To Bridge Phosphatidylinositol-4-Kinase IIIalpha (PI4KIIIalpha) and NS5A and Upregulates PI4KIIIalpha Activation, Thereby Promoting the Translocation of the Ternary Complex to the Endoplasmic Reticulum for Viral Replication.</title>
        <authorList>
            <person name="Wong M.T."/>
            <person name="Chen S.S."/>
        </authorList>
    </citation>
    <scope>IDENTIFICATION IN A COMPLEX WITH HOST PI4KA AND CHKA (NON-STRUCTURAL PROTEIN 5A)</scope>
</reference>
<reference key="19">
    <citation type="journal article" date="2017" name="J. Biol. Chem.">
        <title>NMR reveals the intrinsically disordered domain 2 of NS5A protein as an allosteric regulator of the hepatitis C virus RNA polymerase NS5B.</title>
        <authorList>
            <person name="Bessa L.M."/>
            <person name="Launay H."/>
            <person name="Dujardin M."/>
            <person name="Cantrelle F.X."/>
            <person name="Lippens G."/>
            <person name="Landrieu I."/>
            <person name="Schneider R."/>
            <person name="Hanoulle X."/>
        </authorList>
    </citation>
    <scope>DOMAIN (NON-STRUCTURAL PROTEIN 5A)</scope>
    <scope>INTERACTION WITH RNA-DIRECTED RNA POLYMERASE</scope>
</reference>
<reference key="20">
    <citation type="journal article" date="2018" name="J. Virol.">
        <title>Sequential S232/S235/S238 Phosphorylation of the Hepatitis C Virus Nonstructural Protein 5A.</title>
        <authorList>
            <person name="Hsu S.C."/>
            <person name="Tsai C.N."/>
            <person name="Lee K.Y."/>
            <person name="Pan T.C."/>
            <person name="Lo C.W."/>
            <person name="Yu M.J."/>
        </authorList>
    </citation>
    <scope>PHOSPHORYLATION AT SER-2205; SER-2208 AND SER-2211</scope>
    <scope>MUTAGENESIS OF SER-2205; SER-2208 AND SER-2211</scope>
</reference>
<reference key="21">
    <citation type="journal article" date="2018" name="Biochemistry">
        <title>Role of the Conserved DECH-Box Cysteine in Coupling Hepatitis C Virus Helicase-Catalyzed ATP Hydrolysis to RNA Unwinding.</title>
        <authorList>
            <person name="Yerukhimovich M.M."/>
            <person name="Marohnic C.C."/>
            <person name="Frick D.N."/>
        </authorList>
    </citation>
    <scope>FUNCTION (SERINE PROTEASE/HELICASE NS3)</scope>
    <scope>CATALYTIC ACTIVITY (SERINE PROTEASE/HELICASE NS3)</scope>
    <scope>MUTAGENESIS OF CYS-1322</scope>
    <scope>COFACTOR (SERINE PROTEASE/HELICASE NS3)</scope>
</reference>
<reference key="22">
    <citation type="journal article" date="2018" name="J. Virol.">
        <title>NS3 from Hepatitis C Virus Strain JFH-1 Is an Unusually Robust Helicase That Is Primed To Bind and Unwind Viral RNA.</title>
        <authorList>
            <person name="Zhou T."/>
            <person name="Ren X."/>
            <person name="Adams R.L."/>
            <person name="Pyle A.M."/>
        </authorList>
    </citation>
    <scope>FUNCTION (SERINE PROTEASE/HELICASE NS3)</scope>
    <scope>CATALYTIC ACTIVITY (SERINE PROTEASE/HELICASE NS3)</scope>
</reference>
<reference key="23">
    <citation type="journal article" date="2018" name="Protein Cell">
        <title>RNA binding protein 24 regulates the translation and replication of hepatitis C virus.</title>
        <authorList>
            <person name="Cao H."/>
            <person name="Zhao K."/>
            <person name="Yao Y."/>
            <person name="Guo J."/>
            <person name="Gao X."/>
            <person name="Yang Q."/>
            <person name="Guo M."/>
            <person name="Zhu W."/>
            <person name="Wang Y."/>
            <person name="Wu C."/>
            <person name="Chen J."/>
            <person name="Zhou Y."/>
            <person name="Hu X."/>
            <person name="Lu M."/>
            <person name="Chen X."/>
            <person name="Pei R."/>
        </authorList>
    </citation>
    <scope>INTERACTION WITH HOST RBM24 (MATURE CORE PROTEIN)</scope>
    <scope>INTERACTION WITH HOST RBM24 (SERINE PROTEASE/HELICASE NS3)</scope>
</reference>
<reference key="24">
    <citation type="journal article" date="2018" name="J. Virol.">
        <title>Glycine Zipper Motifs in Hepatitis C Virus Nonstructural Protein 4B Are Required for the Establishment of Viral Replication Organelles.</title>
        <authorList>
            <person name="Paul D."/>
            <person name="Madan V."/>
            <person name="Ramirez O."/>
            <person name="Bencun M."/>
            <person name="Stoeck I.K."/>
            <person name="Jirasko V."/>
            <person name="Bartenschlager R."/>
        </authorList>
    </citation>
    <scope>FUNCTION (NON-STRUCTURAL PROTEIN 4B)</scope>
    <scope>DOMAIN (NON-STRUCTURAL PROTEIN 4B)</scope>
</reference>
<reference key="25">
    <citation type="journal article" date="2018" name="PLoS Pathog.">
        <title>A role for domain I of the hepatitis C virus NS5A protein in virus assembly.</title>
        <authorList>
            <person name="Yin C."/>
            <person name="Goonawardane N."/>
            <person name="Stewart H."/>
            <person name="Harris M."/>
        </authorList>
    </citation>
    <scope>DOMAIN (NON-STRUCTURAL PROTEIN 5A)</scope>
    <scope>MUTAGENESIS OF PRO-2011; TYR-2019; GLY-2021; TRP-2023; GLY-2027; CYS-2035; GLY-2036; VAL-2043; GLY-2072; THR-2110 AND PRO-2121</scope>
    <scope>RNA-BINDING</scope>
    <scope>SUBUNIT (NON-STRUCTURAL PROTEIN 5A)</scope>
    <scope>SUBCELLULAR LOCATION (NON-STRUCTURAL PROTEIN 5A)</scope>
    <scope>SUBCELLULAR LOCATION (MATURE CORE PROTEIN)</scope>
</reference>
<reference key="26">
    <citation type="journal article" date="2019" name="J. Biol. Chem.">
        <title>Cyclophilin A allows the allosteric regulation of a structural motif in the disordered domain 2 of NS5A and thereby fine-tunes HCV RNA replication.</title>
        <authorList>
            <person name="Dujardin M."/>
            <person name="Madan V."/>
            <person name="Gandhi N.S."/>
            <person name="Cantrelle F.X."/>
            <person name="Launay H."/>
            <person name="Huvent I."/>
            <person name="Bartenschlager R."/>
            <person name="Lippens G."/>
            <person name="Hanoulle X."/>
        </authorList>
    </citation>
    <scope>INTERACTION WITH HOST PPIA (NON-STRUCTURAL PROTEIN 5A)</scope>
    <scope>DOMAIN (NON-STRUCTURAL PROTEIN 5A)</scope>
</reference>
<reference key="27">
    <citation type="journal article" date="2019" name="J. Virol.">
        <title>Serine 229 Balances the Hepatitis C Virus Nonstructural Protein NS5A between Hypo- and Hyperphosphorylated States.</title>
        <authorList>
            <person name="Tsai C.N."/>
            <person name="Pan T.C."/>
            <person name="Chiang C.H."/>
            <person name="Yu C.C."/>
            <person name="Su S.H."/>
            <person name="Yu M.J."/>
        </authorList>
    </citation>
    <scope>FUNCTION (NON-STRUCTURAL PROTEIN 5A)</scope>
    <scope>PHOSPHORYLATION (NON-STRUCTURAL PROTEIN 5A)</scope>
    <scope>PHOSPHORYLATION AT SER-2205; SER-2208; SER-2211 AND SER-2214</scope>
    <scope>MUTAGENESIS OF SER-2211</scope>
</reference>
<reference key="28">
    <citation type="journal article" date="2019" name="J. Biol. Chem.">
        <title>Phosphorylated tyrosine 93 of hepatitis C virus nonstructural protein 5A is essential for interaction with host c-Src and efficient viral replication.</title>
        <authorList>
            <person name="Klinker S."/>
            <person name="Stindt S."/>
            <person name="Gremer L."/>
            <person name="Bode J.G."/>
            <person name="Gertzen C.G.W."/>
            <person name="Gohlke H."/>
            <person name="Weiergraeber O.H."/>
            <person name="Hoffmann S."/>
            <person name="Willbold D."/>
        </authorList>
    </citation>
    <scope>PHOSPHORYLATION AT TYR-2069</scope>
    <scope>INTERACTION WITH HOST SRC (NON-STRUCTURAL PROTEIN 5A)</scope>
</reference>
<reference key="29">
    <citation type="journal article" date="2019" name="Cells">
        <title>Endoplasmic Reticulum Detergent-Resistant Membranes Accommodate Hepatitis C Virus Proteins for Viral Assembly.</title>
        <authorList>
            <person name="Boyer A."/>
            <person name="Dreneau J."/>
            <person name="Dumans A."/>
            <person name="Burlaud-Gaillard J."/>
            <person name="Bull-Maurer A."/>
            <person name="Roingeard P."/>
            <person name="Meunier J.C."/>
        </authorList>
    </citation>
    <scope>FUNCTION (PROTEASE NS2)</scope>
    <scope>IDENTIFICATION IN THE ASSEMBLY INITIATION COMPLEX (PROTEASE NS2)</scope>
    <scope>IDENTIFICATION IN THE ASSEMBLY INITIATION COMPLEX (ENVELOPE GLYCOPROTEIN E1)</scope>
    <scope>IDENTIFICATION IN THE ASSEMBLY INITIATION COMPLEX (ENVELOPE GLYCOPROTEIN E2)</scope>
    <scope>IDENTIFICATION IN THE ASSEMBLY INITIATION COMPLEX (SERINE PROTEASE/HELICASE NS3)</scope>
    <scope>IDENTIFICATION IN THE ASSEMBLY INITIATION COMPLEX (NON-STRUCTURAL PROTEIN 4A)</scope>
    <scope>IDENTIFICATION IN THE ASSEMBLY INITIATION COMPLEX (NON-STRUCTURAL PROTEIN 5A)</scope>
    <scope>IDENTIFICATION IN THE ASSEMBLY INITIATION COMPLEX (MATURE CORE PROTEIN)</scope>
</reference>
<protein>
    <recommendedName>
        <fullName>Genome polyprotein</fullName>
    </recommendedName>
    <component>
        <recommendedName>
            <fullName>Core protein precursor</fullName>
        </recommendedName>
        <alternativeName>
            <fullName>Capsid protein C</fullName>
        </alternativeName>
        <alternativeName>
            <fullName>p23</fullName>
        </alternativeName>
    </component>
    <component>
        <recommendedName>
            <fullName>Mature core protein</fullName>
        </recommendedName>
        <alternativeName>
            <fullName>p21</fullName>
        </alternativeName>
    </component>
    <component>
        <recommendedName>
            <fullName>Envelope glycoprotein E1</fullName>
        </recommendedName>
        <alternativeName>
            <fullName>gp32</fullName>
        </alternativeName>
        <alternativeName>
            <fullName>gp35</fullName>
        </alternativeName>
    </component>
    <component>
        <recommendedName>
            <fullName>Envelope glycoprotein E2</fullName>
        </recommendedName>
        <alternativeName>
            <fullName>NS1</fullName>
        </alternativeName>
        <alternativeName>
            <fullName>gp68</fullName>
        </alternativeName>
        <alternativeName>
            <fullName>gp70</fullName>
        </alternativeName>
    </component>
    <component>
        <recommendedName>
            <fullName>Viroporin p7</fullName>
        </recommendedName>
    </component>
    <component>
        <recommendedName>
            <fullName>Protease NS2</fullName>
            <shortName>p23</shortName>
            <ecNumber evidence="4">3.4.22.-</ecNumber>
        </recommendedName>
        <alternativeName>
            <fullName>Non-structural protein 2</fullName>
            <shortName>NS2</shortName>
        </alternativeName>
    </component>
    <component>
        <recommendedName>
            <fullName>Serine protease/helicase NS3</fullName>
            <ecNumber evidence="6">3.4.21.98</ecNumber>
            <ecNumber evidence="34 40">3.6.1.15</ecNumber>
            <ecNumber evidence="34 40">3.6.4.13</ecNumber>
        </recommendedName>
        <alternativeName>
            <fullName>Hepacivirin</fullName>
        </alternativeName>
        <alternativeName>
            <fullName evidence="45">NS3 helicase</fullName>
        </alternativeName>
        <alternativeName>
            <fullName evidence="6">NS3 protease</fullName>
        </alternativeName>
        <alternativeName>
            <fullName>NS3P</fullName>
        </alternativeName>
        <alternativeName>
            <fullName>Viroporin p70</fullName>
        </alternativeName>
    </component>
    <component>
        <recommendedName>
            <fullName>Non-structural protein 4A</fullName>
            <shortName>NS4A</shortName>
        </recommendedName>
        <alternativeName>
            <fullName>p8</fullName>
        </alternativeName>
    </component>
    <component>
        <recommendedName>
            <fullName>Non-structural protein 4B</fullName>
            <shortName>NS4B</shortName>
        </recommendedName>
        <alternativeName>
            <fullName>p27</fullName>
        </alternativeName>
    </component>
    <component>
        <recommendedName>
            <fullName>Non-structural protein 5A</fullName>
            <shortName>NS5A</shortName>
        </recommendedName>
        <alternativeName>
            <fullName>p56/58</fullName>
        </alternativeName>
    </component>
    <component>
        <recommendedName>
            <fullName>RNA-directed RNA polymerase</fullName>
            <ecNumber evidence="6">2.7.7.48</ecNumber>
        </recommendedName>
        <alternativeName>
            <fullName>NS5B</fullName>
        </alternativeName>
        <alternativeName>
            <fullName>p68</fullName>
        </alternativeName>
    </component>
</protein>
<dbReference type="EC" id="3.4.22.-" evidence="4"/>
<dbReference type="EC" id="3.4.21.98" evidence="6"/>
<dbReference type="EC" id="3.6.1.15" evidence="34 40"/>
<dbReference type="EC" id="3.6.4.13" evidence="34 40"/>
<dbReference type="EC" id="2.7.7.48" evidence="6"/>
<dbReference type="EMBL" id="AB047639">
    <property type="protein sequence ID" value="BAB32872.1"/>
    <property type="molecule type" value="Genomic_RNA"/>
</dbReference>
<dbReference type="PDB" id="2KZQ">
    <property type="method" value="NMR"/>
    <property type="chains" value="A=684-719"/>
</dbReference>
<dbReference type="PDB" id="2LIF">
    <property type="method" value="NMR"/>
    <property type="chains" value="A=171-195"/>
</dbReference>
<dbReference type="PDB" id="2LVG">
    <property type="method" value="NMR"/>
    <property type="chains" value="A=1716-1755"/>
</dbReference>
<dbReference type="PDB" id="2XXD">
    <property type="method" value="X-ray"/>
    <property type="resolution" value="1.88 A"/>
    <property type="chains" value="A=2443-3005"/>
</dbReference>
<dbReference type="PDB" id="2XYM">
    <property type="method" value="X-ray"/>
    <property type="resolution" value="1.77 A"/>
    <property type="chains" value="A=2443-3005"/>
</dbReference>
<dbReference type="PDB" id="3I5K">
    <property type="method" value="X-ray"/>
    <property type="resolution" value="2.20 A"/>
    <property type="chains" value="A/B/C/D=2443-3007"/>
</dbReference>
<dbReference type="PDB" id="4AEP">
    <property type="method" value="X-ray"/>
    <property type="resolution" value="1.80 A"/>
    <property type="chains" value="A=2443-3013"/>
</dbReference>
<dbReference type="PDB" id="4AEX">
    <property type="method" value="X-ray"/>
    <property type="resolution" value="2.41 A"/>
    <property type="chains" value="A/B=2443-3013"/>
</dbReference>
<dbReference type="PDB" id="4E76">
    <property type="method" value="X-ray"/>
    <property type="resolution" value="2.50 A"/>
    <property type="chains" value="A=2443-2885, A=2896-3012"/>
</dbReference>
<dbReference type="PDB" id="4E78">
    <property type="method" value="X-ray"/>
    <property type="resolution" value="2.90 A"/>
    <property type="chains" value="A=2443-2885, A=2896-3012"/>
</dbReference>
<dbReference type="PDB" id="4E7A">
    <property type="method" value="X-ray"/>
    <property type="resolution" value="3.00 A"/>
    <property type="chains" value="A=2443-2885, A=2896-3012"/>
</dbReference>
<dbReference type="PDB" id="4J1V">
    <property type="method" value="X-ray"/>
    <property type="resolution" value="1.95 A"/>
    <property type="chains" value="E/F/G/H=2284-2303"/>
</dbReference>
<dbReference type="PDB" id="4OBC">
    <property type="method" value="X-ray"/>
    <property type="resolution" value="2.50 A"/>
    <property type="chains" value="A=2443-3012"/>
</dbReference>
<dbReference type="PDB" id="4WT9">
    <property type="method" value="X-ray"/>
    <property type="resolution" value="2.50 A"/>
    <property type="chains" value="A=2443-2885, A=2896-3012"/>
</dbReference>
<dbReference type="PDB" id="4WTA">
    <property type="method" value="X-ray"/>
    <property type="resolution" value="2.80 A"/>
    <property type="chains" value="A=2443-2885, A=2896-3012"/>
</dbReference>
<dbReference type="PDB" id="4WTC">
    <property type="method" value="X-ray"/>
    <property type="resolution" value="2.75 A"/>
    <property type="chains" value="A=2443-2885, A=2896-3012"/>
</dbReference>
<dbReference type="PDB" id="4WTD">
    <property type="method" value="X-ray"/>
    <property type="resolution" value="2.70 A"/>
    <property type="chains" value="A=2443-2885, A=2896-3012"/>
</dbReference>
<dbReference type="PDB" id="4WTE">
    <property type="method" value="X-ray"/>
    <property type="resolution" value="2.90 A"/>
    <property type="chains" value="A=2443-2885, A=2896-3012"/>
</dbReference>
<dbReference type="PDB" id="4WTF">
    <property type="method" value="X-ray"/>
    <property type="resolution" value="2.65 A"/>
    <property type="chains" value="A=2443-2885, A=2896-3012"/>
</dbReference>
<dbReference type="PDB" id="4WTG">
    <property type="method" value="X-ray"/>
    <property type="resolution" value="2.90 A"/>
    <property type="chains" value="A=2443-2885, A=2896-3012"/>
</dbReference>
<dbReference type="PDB" id="4WTI">
    <property type="method" value="X-ray"/>
    <property type="resolution" value="2.80 A"/>
    <property type="chains" value="A=2443-3012"/>
</dbReference>
<dbReference type="PDB" id="4WTJ">
    <property type="method" value="X-ray"/>
    <property type="resolution" value="2.20 A"/>
    <property type="chains" value="A=2443-3012"/>
</dbReference>
<dbReference type="PDB" id="4WTK">
    <property type="method" value="X-ray"/>
    <property type="resolution" value="2.50 A"/>
    <property type="chains" value="A=2443-3012"/>
</dbReference>
<dbReference type="PDB" id="4WTL">
    <property type="method" value="X-ray"/>
    <property type="resolution" value="2.00 A"/>
    <property type="chains" value="A=2443-3012"/>
</dbReference>
<dbReference type="PDB" id="4WTM">
    <property type="method" value="X-ray"/>
    <property type="resolution" value="2.15 A"/>
    <property type="chains" value="A=2443-3012"/>
</dbReference>
<dbReference type="PDB" id="5NPJ">
    <property type="method" value="X-ray"/>
    <property type="resolution" value="1.90 A"/>
    <property type="chains" value="D/E=531-542"/>
</dbReference>
<dbReference type="PDB" id="5QJ0">
    <property type="method" value="X-ray"/>
    <property type="resolution" value="2.08 A"/>
    <property type="chains" value="A=2443-3015"/>
</dbReference>
<dbReference type="PDB" id="5QJ1">
    <property type="method" value="X-ray"/>
    <property type="resolution" value="2.17 A"/>
    <property type="chains" value="A=2443-3015"/>
</dbReference>
<dbReference type="PDB" id="5TWM">
    <property type="method" value="X-ray"/>
    <property type="resolution" value="1.97 A"/>
    <property type="chains" value="A=2443-3015"/>
</dbReference>
<dbReference type="PDB" id="5UJ2">
    <property type="method" value="X-ray"/>
    <property type="resolution" value="2.90 A"/>
    <property type="chains" value="A=2443-3012"/>
</dbReference>
<dbReference type="PDB" id="6HT4">
    <property type="method" value="NMR"/>
    <property type="chains" value="A=2280-2299"/>
</dbReference>
<dbReference type="PDBsum" id="2KZQ"/>
<dbReference type="PDBsum" id="2LIF"/>
<dbReference type="PDBsum" id="2LVG"/>
<dbReference type="PDBsum" id="2XXD"/>
<dbReference type="PDBsum" id="2XYM"/>
<dbReference type="PDBsum" id="3I5K"/>
<dbReference type="PDBsum" id="4AEP"/>
<dbReference type="PDBsum" id="4AEX"/>
<dbReference type="PDBsum" id="4E76"/>
<dbReference type="PDBsum" id="4E78"/>
<dbReference type="PDBsum" id="4E7A"/>
<dbReference type="PDBsum" id="4J1V"/>
<dbReference type="PDBsum" id="4OBC"/>
<dbReference type="PDBsum" id="4WT9"/>
<dbReference type="PDBsum" id="4WTA"/>
<dbReference type="PDBsum" id="4WTC"/>
<dbReference type="PDBsum" id="4WTD"/>
<dbReference type="PDBsum" id="4WTE"/>
<dbReference type="PDBsum" id="4WTF"/>
<dbReference type="PDBsum" id="4WTG"/>
<dbReference type="PDBsum" id="4WTI"/>
<dbReference type="PDBsum" id="4WTJ"/>
<dbReference type="PDBsum" id="4WTK"/>
<dbReference type="PDBsum" id="4WTL"/>
<dbReference type="PDBsum" id="4WTM"/>
<dbReference type="PDBsum" id="5NPJ"/>
<dbReference type="PDBsum" id="5QJ0"/>
<dbReference type="PDBsum" id="5QJ1"/>
<dbReference type="PDBsum" id="5TWM"/>
<dbReference type="PDBsum" id="5UJ2"/>
<dbReference type="PDBsum" id="6HT4"/>
<dbReference type="BMRB" id="Q99IB8"/>
<dbReference type="SMR" id="Q99IB8"/>
<dbReference type="DIP" id="DIP-48925N"/>
<dbReference type="IntAct" id="Q99IB8">
    <property type="interactions" value="345"/>
</dbReference>
<dbReference type="MINT" id="Q99IB8"/>
<dbReference type="BindingDB" id="Q99IB8"/>
<dbReference type="ChEMBL" id="CHEMBL4295932"/>
<dbReference type="DrugCentral" id="Q99IB8"/>
<dbReference type="MEROPS" id="S29.001"/>
<dbReference type="iPTMnet" id="Q99IB8"/>
<dbReference type="ABCD" id="Q99IB8">
    <property type="antibodies" value="1 sequenced antibody"/>
</dbReference>
<dbReference type="euHCVdb" id="AB047639"/>
<dbReference type="BRENDA" id="3.4.21.98">
    <property type="organism ID" value="17000"/>
</dbReference>
<dbReference type="Reactome" id="R-HSA-5621480">
    <property type="pathway name" value="Dectin-2 family"/>
</dbReference>
<dbReference type="EvolutionaryTrace" id="Q99IB8"/>
<dbReference type="Proteomes" id="UP000008096">
    <property type="component" value="Genome"/>
</dbReference>
<dbReference type="GO" id="GO:0044167">
    <property type="term" value="C:host cell endoplasmic reticulum membrane"/>
    <property type="evidence" value="ECO:0007669"/>
    <property type="project" value="UniProtKB-SubCell"/>
</dbReference>
<dbReference type="GO" id="GO:0044186">
    <property type="term" value="C:host cell lipid droplet"/>
    <property type="evidence" value="ECO:0007669"/>
    <property type="project" value="UniProtKB-SubCell"/>
</dbReference>
<dbReference type="GO" id="GO:0044191">
    <property type="term" value="C:host cell mitochondrial membrane"/>
    <property type="evidence" value="ECO:0007669"/>
    <property type="project" value="UniProtKB-SubCell"/>
</dbReference>
<dbReference type="GO" id="GO:0042025">
    <property type="term" value="C:host cell nucleus"/>
    <property type="evidence" value="ECO:0007669"/>
    <property type="project" value="UniProtKB-SubCell"/>
</dbReference>
<dbReference type="GO" id="GO:0044220">
    <property type="term" value="C:host cell perinuclear region of cytoplasm"/>
    <property type="evidence" value="ECO:0007669"/>
    <property type="project" value="UniProtKB-SubCell"/>
</dbReference>
<dbReference type="GO" id="GO:0020002">
    <property type="term" value="C:host cell plasma membrane"/>
    <property type="evidence" value="ECO:0007669"/>
    <property type="project" value="UniProtKB-SubCell"/>
</dbReference>
<dbReference type="GO" id="GO:0016020">
    <property type="term" value="C:membrane"/>
    <property type="evidence" value="ECO:0007669"/>
    <property type="project" value="UniProtKB-KW"/>
</dbReference>
<dbReference type="GO" id="GO:1990904">
    <property type="term" value="C:ribonucleoprotein complex"/>
    <property type="evidence" value="ECO:0007669"/>
    <property type="project" value="UniProtKB-KW"/>
</dbReference>
<dbReference type="GO" id="GO:0019031">
    <property type="term" value="C:viral envelope"/>
    <property type="evidence" value="ECO:0000304"/>
    <property type="project" value="Reactome"/>
</dbReference>
<dbReference type="GO" id="GO:0019013">
    <property type="term" value="C:viral nucleocapsid"/>
    <property type="evidence" value="ECO:0007669"/>
    <property type="project" value="UniProtKB-KW"/>
</dbReference>
<dbReference type="GO" id="GO:0055036">
    <property type="term" value="C:virion membrane"/>
    <property type="evidence" value="ECO:0007669"/>
    <property type="project" value="UniProtKB-SubCell"/>
</dbReference>
<dbReference type="GO" id="GO:0005524">
    <property type="term" value="F:ATP binding"/>
    <property type="evidence" value="ECO:0007669"/>
    <property type="project" value="UniProtKB-KW"/>
</dbReference>
<dbReference type="GO" id="GO:0016887">
    <property type="term" value="F:ATP hydrolysis activity"/>
    <property type="evidence" value="ECO:0007669"/>
    <property type="project" value="RHEA"/>
</dbReference>
<dbReference type="GO" id="GO:0015267">
    <property type="term" value="F:channel activity"/>
    <property type="evidence" value="ECO:0007669"/>
    <property type="project" value="UniProtKB-KW"/>
</dbReference>
<dbReference type="GO" id="GO:0004197">
    <property type="term" value="F:cysteine-type endopeptidase activity"/>
    <property type="evidence" value="ECO:0007669"/>
    <property type="project" value="InterPro"/>
</dbReference>
<dbReference type="GO" id="GO:0042802">
    <property type="term" value="F:identical protein binding"/>
    <property type="evidence" value="ECO:0000353"/>
    <property type="project" value="IntAct"/>
</dbReference>
<dbReference type="GO" id="GO:0003723">
    <property type="term" value="F:RNA binding"/>
    <property type="evidence" value="ECO:0000315"/>
    <property type="project" value="UniProtKB"/>
</dbReference>
<dbReference type="GO" id="GO:0003724">
    <property type="term" value="F:RNA helicase activity"/>
    <property type="evidence" value="ECO:0007669"/>
    <property type="project" value="UniProtKB-EC"/>
</dbReference>
<dbReference type="GO" id="GO:0003968">
    <property type="term" value="F:RNA-directed RNA polymerase activity"/>
    <property type="evidence" value="ECO:0007669"/>
    <property type="project" value="UniProtKB-KW"/>
</dbReference>
<dbReference type="GO" id="GO:0004252">
    <property type="term" value="F:serine-type endopeptidase activity"/>
    <property type="evidence" value="ECO:0007669"/>
    <property type="project" value="InterPro"/>
</dbReference>
<dbReference type="GO" id="GO:0017124">
    <property type="term" value="F:SH3 domain binding"/>
    <property type="evidence" value="ECO:0007669"/>
    <property type="project" value="UniProtKB-KW"/>
</dbReference>
<dbReference type="GO" id="GO:0005198">
    <property type="term" value="F:structural molecule activity"/>
    <property type="evidence" value="ECO:0007669"/>
    <property type="project" value="InterPro"/>
</dbReference>
<dbReference type="GO" id="GO:0008270">
    <property type="term" value="F:zinc ion binding"/>
    <property type="evidence" value="ECO:0007669"/>
    <property type="project" value="InterPro"/>
</dbReference>
<dbReference type="GO" id="GO:0075512">
    <property type="term" value="P:clathrin-dependent endocytosis of virus by host cell"/>
    <property type="evidence" value="ECO:0007669"/>
    <property type="project" value="UniProtKB-KW"/>
</dbReference>
<dbReference type="GO" id="GO:0039654">
    <property type="term" value="P:fusion of virus membrane with host endosome membrane"/>
    <property type="evidence" value="ECO:0007669"/>
    <property type="project" value="UniProtKB-KW"/>
</dbReference>
<dbReference type="GO" id="GO:0034220">
    <property type="term" value="P:monoatomic ion transmembrane transport"/>
    <property type="evidence" value="ECO:0007669"/>
    <property type="project" value="UniProtKB-KW"/>
</dbReference>
<dbReference type="GO" id="GO:0006508">
    <property type="term" value="P:proteolysis"/>
    <property type="evidence" value="ECO:0007669"/>
    <property type="project" value="UniProtKB-KW"/>
</dbReference>
<dbReference type="GO" id="GO:0039520">
    <property type="term" value="P:symbiont-mediated activation of host autophagy"/>
    <property type="evidence" value="ECO:0007669"/>
    <property type="project" value="UniProtKB-KW"/>
</dbReference>
<dbReference type="GO" id="GO:0039645">
    <property type="term" value="P:symbiont-mediated perturbation of host cell cycle G1/S transition checkpoint"/>
    <property type="evidence" value="ECO:0007669"/>
    <property type="project" value="UniProtKB-KW"/>
</dbReference>
<dbReference type="GO" id="GO:0039545">
    <property type="term" value="P:symbiont-mediated suppression of host cytoplasmic pattern recognition receptor signaling pathway via inhibition of MAVS activity"/>
    <property type="evidence" value="ECO:0007669"/>
    <property type="project" value="UniProtKB-KW"/>
</dbReference>
<dbReference type="GO" id="GO:0039563">
    <property type="term" value="P:symbiont-mediated suppression of host JAK-STAT cascade via inhibition of STAT1 activity"/>
    <property type="evidence" value="ECO:0007669"/>
    <property type="project" value="UniProtKB-KW"/>
</dbReference>
<dbReference type="GO" id="GO:0039527">
    <property type="term" value="P:symbiont-mediated suppression of host TRAF-mediated signal transduction"/>
    <property type="evidence" value="ECO:0007669"/>
    <property type="project" value="UniProtKB-KW"/>
</dbReference>
<dbReference type="GO" id="GO:0039502">
    <property type="term" value="P:symbiont-mediated suppression of host type I interferon-mediated signaling pathway"/>
    <property type="evidence" value="ECO:0007669"/>
    <property type="project" value="UniProtKB-KW"/>
</dbReference>
<dbReference type="GO" id="GO:0019087">
    <property type="term" value="P:symbiont-mediated transformation of host cell"/>
    <property type="evidence" value="ECO:0007669"/>
    <property type="project" value="InterPro"/>
</dbReference>
<dbReference type="GO" id="GO:0039694">
    <property type="term" value="P:viral RNA genome replication"/>
    <property type="evidence" value="ECO:0007669"/>
    <property type="project" value="InterPro"/>
</dbReference>
<dbReference type="GO" id="GO:0019062">
    <property type="term" value="P:virion attachment to host cell"/>
    <property type="evidence" value="ECO:0007669"/>
    <property type="project" value="UniProtKB-KW"/>
</dbReference>
<dbReference type="CDD" id="cd20903">
    <property type="entry name" value="HCV_p7"/>
    <property type="match status" value="1"/>
</dbReference>
<dbReference type="CDD" id="cd23202">
    <property type="entry name" value="Hepacivirus_RdRp"/>
    <property type="match status" value="1"/>
</dbReference>
<dbReference type="DisProt" id="DP01031"/>
<dbReference type="FunFam" id="2.30.30.710:FF:000001">
    <property type="entry name" value="Genome polyprotein"/>
    <property type="match status" value="1"/>
</dbReference>
<dbReference type="FunFam" id="3.30.160.890:FF:000001">
    <property type="entry name" value="Genome polyprotein"/>
    <property type="match status" value="1"/>
</dbReference>
<dbReference type="FunFam" id="3.30.70.270:FF:000015">
    <property type="entry name" value="Genome polyprotein"/>
    <property type="match status" value="1"/>
</dbReference>
<dbReference type="FunFam" id="3.40.50.300:FF:000557">
    <property type="entry name" value="Genome polyprotein"/>
    <property type="match status" value="1"/>
</dbReference>
<dbReference type="FunFam" id="3.40.50.300:FF:000717">
    <property type="entry name" value="Genome polyprotein"/>
    <property type="match status" value="1"/>
</dbReference>
<dbReference type="FunFam" id="4.10.710.10:FF:000001">
    <property type="entry name" value="Genome polyprotein"/>
    <property type="match status" value="1"/>
</dbReference>
<dbReference type="Gene3D" id="2.40.10.120">
    <property type="match status" value="1"/>
</dbReference>
<dbReference type="Gene3D" id="3.30.70.270">
    <property type="match status" value="2"/>
</dbReference>
<dbReference type="Gene3D" id="6.10.250.1610">
    <property type="match status" value="1"/>
</dbReference>
<dbReference type="Gene3D" id="6.10.250.1750">
    <property type="match status" value="1"/>
</dbReference>
<dbReference type="Gene3D" id="6.10.250.2920">
    <property type="match status" value="1"/>
</dbReference>
<dbReference type="Gene3D" id="2.20.25.210">
    <property type="entry name" value="Hepatitis C NS5A, domain 1B"/>
    <property type="match status" value="1"/>
</dbReference>
<dbReference type="Gene3D" id="4.10.710.10">
    <property type="entry name" value="Hepatitis C Virus Capsid Protein, Chain A"/>
    <property type="match status" value="1"/>
</dbReference>
<dbReference type="Gene3D" id="3.30.160.890">
    <property type="entry name" value="Hepatitis C virus envelope glycoprotein E1, chain C"/>
    <property type="match status" value="1"/>
</dbReference>
<dbReference type="Gene3D" id="2.30.30.710">
    <property type="entry name" value="Hepatitis C virus non-structural protein NS2, C-terminal domain"/>
    <property type="match status" value="1"/>
</dbReference>
<dbReference type="Gene3D" id="1.20.1280.150">
    <property type="entry name" value="Hepatitis C virus non-structural protein NS2, N-terminal domain"/>
    <property type="match status" value="1"/>
</dbReference>
<dbReference type="Gene3D" id="2.20.25.220">
    <property type="entry name" value="Hepatitis C virus NS5A, 1B domain"/>
    <property type="match status" value="1"/>
</dbReference>
<dbReference type="Gene3D" id="3.40.50.300">
    <property type="entry name" value="P-loop containing nucleotide triphosphate hydrolases"/>
    <property type="match status" value="2"/>
</dbReference>
<dbReference type="Gene3D" id="1.10.820.10">
    <property type="entry name" value="RNA Helicase Chain A , domain 3"/>
    <property type="match status" value="1"/>
</dbReference>
<dbReference type="Gene3D" id="2.40.10.10">
    <property type="entry name" value="Trypsin-like serine proteases"/>
    <property type="match status" value="1"/>
</dbReference>
<dbReference type="InterPro" id="IPR043502">
    <property type="entry name" value="DNA/RNA_pol_sf"/>
</dbReference>
<dbReference type="InterPro" id="IPR011492">
    <property type="entry name" value="Flavi_DEAD"/>
</dbReference>
<dbReference type="InterPro" id="IPR002521">
    <property type="entry name" value="HCV_Core_C"/>
</dbReference>
<dbReference type="InterPro" id="IPR044896">
    <property type="entry name" value="HCV_core_chain_A"/>
</dbReference>
<dbReference type="InterPro" id="IPR002522">
    <property type="entry name" value="HCV_core_N"/>
</dbReference>
<dbReference type="InterPro" id="IPR002519">
    <property type="entry name" value="HCV_Env"/>
</dbReference>
<dbReference type="InterPro" id="IPR002531">
    <property type="entry name" value="HCV_NS1"/>
</dbReference>
<dbReference type="InterPro" id="IPR002518">
    <property type="entry name" value="HCV_NS2"/>
</dbReference>
<dbReference type="InterPro" id="IPR042205">
    <property type="entry name" value="HCV_NS2_C"/>
</dbReference>
<dbReference type="InterPro" id="IPR042209">
    <property type="entry name" value="HCV_NS2_N"/>
</dbReference>
<dbReference type="InterPro" id="IPR000745">
    <property type="entry name" value="HCV_NS4a"/>
</dbReference>
<dbReference type="InterPro" id="IPR001490">
    <property type="entry name" value="HCV_NS4b"/>
</dbReference>
<dbReference type="InterPro" id="IPR002868">
    <property type="entry name" value="HCV_NS5a"/>
</dbReference>
<dbReference type="InterPro" id="IPR013192">
    <property type="entry name" value="HCV_NS5A_1a"/>
</dbReference>
<dbReference type="InterPro" id="IPR013193">
    <property type="entry name" value="HCV_NS5a_1B_dom"/>
</dbReference>
<dbReference type="InterPro" id="IPR038568">
    <property type="entry name" value="HCV_NS5A_1B_sf"/>
</dbReference>
<dbReference type="InterPro" id="IPR024350">
    <property type="entry name" value="HCV_NS5a_C"/>
</dbReference>
<dbReference type="InterPro" id="IPR049913">
    <property type="entry name" value="HCV_p7"/>
</dbReference>
<dbReference type="InterPro" id="IPR014001">
    <property type="entry name" value="Helicase_ATP-bd"/>
</dbReference>
<dbReference type="InterPro" id="IPR001650">
    <property type="entry name" value="Helicase_C-like"/>
</dbReference>
<dbReference type="InterPro" id="IPR004109">
    <property type="entry name" value="HepC_NS3_protease"/>
</dbReference>
<dbReference type="InterPro" id="IPR054175">
    <property type="entry name" value="NS3_helicase_C"/>
</dbReference>
<dbReference type="InterPro" id="IPR038170">
    <property type="entry name" value="NS5A_1a_sf"/>
</dbReference>
<dbReference type="InterPro" id="IPR027417">
    <property type="entry name" value="P-loop_NTPase"/>
</dbReference>
<dbReference type="InterPro" id="IPR009003">
    <property type="entry name" value="Peptidase_S1_PA"/>
</dbReference>
<dbReference type="InterPro" id="IPR043504">
    <property type="entry name" value="Peptidase_S1_PA_chymotrypsin"/>
</dbReference>
<dbReference type="InterPro" id="IPR043128">
    <property type="entry name" value="Rev_trsase/Diguanyl_cyclase"/>
</dbReference>
<dbReference type="InterPro" id="IPR007094">
    <property type="entry name" value="RNA-dir_pol_PSvirus"/>
</dbReference>
<dbReference type="InterPro" id="IPR002166">
    <property type="entry name" value="RNA_pol_HCV"/>
</dbReference>
<dbReference type="Pfam" id="PF07652">
    <property type="entry name" value="Flavi_DEAD"/>
    <property type="match status" value="1"/>
</dbReference>
<dbReference type="Pfam" id="PF01543">
    <property type="entry name" value="HCV_capsid"/>
    <property type="match status" value="1"/>
</dbReference>
<dbReference type="Pfam" id="PF01542">
    <property type="entry name" value="HCV_core"/>
    <property type="match status" value="1"/>
</dbReference>
<dbReference type="Pfam" id="PF01539">
    <property type="entry name" value="HCV_env"/>
    <property type="match status" value="1"/>
</dbReference>
<dbReference type="Pfam" id="PF01560">
    <property type="entry name" value="HCV_NS1"/>
    <property type="match status" value="1"/>
</dbReference>
<dbReference type="Pfam" id="PF01538">
    <property type="entry name" value="HCV_NS2"/>
    <property type="match status" value="1"/>
</dbReference>
<dbReference type="Pfam" id="PF01006">
    <property type="entry name" value="HCV_NS4a"/>
    <property type="match status" value="1"/>
</dbReference>
<dbReference type="Pfam" id="PF01001">
    <property type="entry name" value="HCV_NS4b"/>
    <property type="match status" value="1"/>
</dbReference>
<dbReference type="Pfam" id="PF01506">
    <property type="entry name" value="HCV_NS5a"/>
    <property type="match status" value="1"/>
</dbReference>
<dbReference type="Pfam" id="PF08300">
    <property type="entry name" value="HCV_NS5a_1a"/>
    <property type="match status" value="1"/>
</dbReference>
<dbReference type="Pfam" id="PF08301">
    <property type="entry name" value="HCV_NS5a_1b"/>
    <property type="match status" value="1"/>
</dbReference>
<dbReference type="Pfam" id="PF12941">
    <property type="entry name" value="HCV_NS5a_C"/>
    <property type="match status" value="1"/>
</dbReference>
<dbReference type="Pfam" id="PF22027">
    <property type="entry name" value="NS3_helicase_C"/>
    <property type="match status" value="1"/>
</dbReference>
<dbReference type="Pfam" id="PF02907">
    <property type="entry name" value="Peptidase_S29"/>
    <property type="match status" value="1"/>
</dbReference>
<dbReference type="Pfam" id="PF00998">
    <property type="entry name" value="RdRP_3"/>
    <property type="match status" value="1"/>
</dbReference>
<dbReference type="SMART" id="SM00487">
    <property type="entry name" value="DEXDc"/>
    <property type="match status" value="1"/>
</dbReference>
<dbReference type="SUPFAM" id="SSF56672">
    <property type="entry name" value="DNA/RNA polymerases"/>
    <property type="match status" value="1"/>
</dbReference>
<dbReference type="SUPFAM" id="SSF52540">
    <property type="entry name" value="P-loop containing nucleoside triphosphate hydrolases"/>
    <property type="match status" value="2"/>
</dbReference>
<dbReference type="SUPFAM" id="SSF50494">
    <property type="entry name" value="Trypsin-like serine proteases"/>
    <property type="match status" value="1"/>
</dbReference>
<dbReference type="PROSITE" id="PS51693">
    <property type="entry name" value="HCV_NS2_PRO"/>
    <property type="match status" value="1"/>
</dbReference>
<dbReference type="PROSITE" id="PS51192">
    <property type="entry name" value="HELICASE_ATP_BIND_1"/>
    <property type="match status" value="1"/>
</dbReference>
<dbReference type="PROSITE" id="PS51194">
    <property type="entry name" value="HELICASE_CTER"/>
    <property type="match status" value="1"/>
</dbReference>
<dbReference type="PROSITE" id="PS51822">
    <property type="entry name" value="HV_PV_NS3_PRO"/>
    <property type="match status" value="1"/>
</dbReference>
<dbReference type="PROSITE" id="PS50507">
    <property type="entry name" value="RDRP_SSRNA_POS"/>
    <property type="match status" value="1"/>
</dbReference>
<keyword id="KW-0002">3D-structure</keyword>
<keyword id="KW-0007">Acetylation</keyword>
<keyword id="KW-1072">Activation of host autophagy by virus</keyword>
<keyword id="KW-0053">Apoptosis</keyword>
<keyword id="KW-0067">ATP-binding</keyword>
<keyword id="KW-0167">Capsid protein</keyword>
<keyword id="KW-1165">Clathrin-mediated endocytosis of virus by host</keyword>
<keyword id="KW-1015">Disulfide bond</keyword>
<keyword id="KW-1170">Fusion of virus membrane with host endosomal membrane</keyword>
<keyword id="KW-1168">Fusion of virus membrane with host membrane</keyword>
<keyword id="KW-1078">G1/S host cell cycle checkpoint dysregulation by virus</keyword>
<keyword id="KW-0325">Glycoprotein</keyword>
<keyword id="KW-0347">Helicase</keyword>
<keyword id="KW-1032">Host cell membrane</keyword>
<keyword id="KW-1035">Host cytoplasm</keyword>
<keyword id="KW-1038">Host endoplasmic reticulum</keyword>
<keyword id="KW-1041">Host lipid droplet</keyword>
<keyword id="KW-1043">Host membrane</keyword>
<keyword id="KW-1045">Host mitochondrion</keyword>
<keyword id="KW-1048">Host nucleus</keyword>
<keyword id="KW-0945">Host-virus interaction</keyword>
<keyword id="KW-0378">Hydrolase</keyword>
<keyword id="KW-1090">Inhibition of host innate immune response by virus</keyword>
<keyword id="KW-1114">Inhibition of host interferon signaling pathway by virus</keyword>
<keyword id="KW-1097">Inhibition of host MAVS by virus</keyword>
<keyword id="KW-1113">Inhibition of host RLR pathway by virus</keyword>
<keyword id="KW-1105">Inhibition of host STAT1 by virus</keyword>
<keyword id="KW-1110">Inhibition of host TRAFs by virus</keyword>
<keyword id="KW-0922">Interferon antiviral system evasion</keyword>
<keyword id="KW-0407">Ion channel</keyword>
<keyword id="KW-0406">Ion transport</keyword>
<keyword id="KW-1017">Isopeptide bond</keyword>
<keyword id="KW-0449">Lipoprotein</keyword>
<keyword id="KW-0460">Magnesium</keyword>
<keyword id="KW-0472">Membrane</keyword>
<keyword id="KW-0479">Metal-binding</keyword>
<keyword id="KW-1121">Modulation of host cell cycle by virus</keyword>
<keyword id="KW-0511">Multifunctional enzyme</keyword>
<keyword id="KW-0547">Nucleotide-binding</keyword>
<keyword id="KW-0548">Nucleotidyltransferase</keyword>
<keyword id="KW-0553">Oncogene</keyword>
<keyword id="KW-0564">Palmitate</keyword>
<keyword id="KW-0597">Phosphoprotein</keyword>
<keyword id="KW-0645">Protease</keyword>
<keyword id="KW-0687">Ribonucleoprotein</keyword>
<keyword id="KW-0694">RNA-binding</keyword>
<keyword id="KW-0696">RNA-directed RNA polymerase</keyword>
<keyword id="KW-0720">Serine protease</keyword>
<keyword id="KW-0729">SH3-binding</keyword>
<keyword id="KW-0788">Thiol protease</keyword>
<keyword id="KW-0804">Transcription</keyword>
<keyword id="KW-0805">Transcription regulation</keyword>
<keyword id="KW-0808">Transferase</keyword>
<keyword id="KW-0812">Transmembrane</keyword>
<keyword id="KW-1133">Transmembrane helix</keyword>
<keyword id="KW-0813">Transport</keyword>
<keyword id="KW-0832">Ubl conjugation</keyword>
<keyword id="KW-1161">Viral attachment to host cell</keyword>
<keyword id="KW-0261">Viral envelope protein</keyword>
<keyword id="KW-0899">Viral immunoevasion</keyword>
<keyword id="KW-1182">Viral ion channel</keyword>
<keyword id="KW-0543">Viral nucleoprotein</keyword>
<keyword id="KW-1162">Viral penetration into host cytoplasm</keyword>
<keyword id="KW-0693">Viral RNA replication</keyword>
<keyword id="KW-0946">Virion</keyword>
<keyword id="KW-1164">Virus endocytosis by host</keyword>
<keyword id="KW-1160">Virus entry into host cell</keyword>
<keyword id="KW-0862">Zinc</keyword>
<organism>
    <name type="scientific">Hepatitis C virus genotype 2a (isolate JFH-1)</name>
    <name type="common">HCV</name>
    <dbReference type="NCBI Taxonomy" id="356411"/>
    <lineage>
        <taxon>Viruses</taxon>
        <taxon>Riboviria</taxon>
        <taxon>Orthornavirae</taxon>
        <taxon>Kitrinoviricota</taxon>
        <taxon>Flasuviricetes</taxon>
        <taxon>Amarillovirales</taxon>
        <taxon>Flaviviridae</taxon>
        <taxon>Hepacivirus</taxon>
        <taxon>Hepacivirus hominis</taxon>
    </lineage>
</organism>